<protein>
    <recommendedName>
        <fullName>Tumor susceptibility gene 101 protein</fullName>
    </recommendedName>
    <alternativeName>
        <fullName>ESCRT-I complex subunit TSG101</fullName>
    </alternativeName>
</protein>
<comment type="function">
    <text evidence="10 27 28 34 37 38 39">Component of the ESCRT-I complex, a regulator of vesicular trafficking process. Binds to ubiquitinated cargo proteins and is required for the sorting of endocytic ubiquitinated cargos into multivesicular bodies (MVBs). Mediates the association between the ESCRT-0 and ESCRT-I complex. Required for completion of cytokinesis; the function requires CEP55. May be involved in cell growth and differentiation. Acts as a negative growth regulator. Involved in the budding of many viruses through an interaction with viral proteins that contain a late-budding motif P-[ST]-A-P. This interaction is essential for viral particle budding of numerous retroviruses. Required for the exosomal release of SDCBP, CD63 and syndecan (PubMed:22660413). It may also play a role in the extracellular release of microvesicles that differ from the exosomes (PubMed:22315426).</text>
</comment>
<comment type="subunit">
    <text evidence="1 2 7 15 18 19 20 21 23 24 26 27 28 29 30 31 32 35 37 38 40">Component of the ESCRT-I complex (endosomal sorting complex required for transport I) which consists of TSG101, VPS28, a VPS37 protein (VPS37A to -D) and MVB12A or MVB12B in a 1:1:1:1 stoichiometry (PubMed:18005716). Interacts with VPS37A, VPS37B and VPS37C (PubMed:15218037, PubMed:15509564). Interacts with DMAP1 (PubMed:10888872). Interacts with ubiquitin (PubMed:11595185). Interacts with stathmin, GMCL and AATF (By similarity). Component of an ESCRT-I complex (endosomal sorting complex required for transport I) which consists of TSG101, VPS28, VPS37A and UBAP1 in a 1:1:1:1 stoichiometry (PubMed:21757351). Interacts with HGS; the interaction mediates the association with the ESCRT-0 complex. Interacts with GGA1 and GGA3 (PubMed:15039775, PubMed:15143060). Interacts (via UEV domain) with PDCD6IP/AIP1 (PubMed:14505570, PubMed:14519844). Interacts with VPS28, SNF8 and VPS36 (PubMed:14505570). Self-associates (PubMed:14505570, PubMed:14519844). Interacts with MVB12A; the association appears to be mediated by the TSG101-VPS37 binary subcomplex. Interacts with VPS37D. Interacts with LRSAM1. Interacts with CEP55; the interaction is required for cytokinesis but not for viral budding (PubMed:17853893). Interacts with PDCD6 (PubMed:18256029). Interacts with LITAF (PubMed:23166352). Interacts with MGRN1 (PubMed:17229889). Interacts with ARRDC1; recruits TSG101 to the plasma membrane (PubMed:21191027, PubMed:22315426).</text>
</comment>
<comment type="subunit">
    <text evidence="8 9 14 34 36">(Microbial infection) Interacts with HIV-1 p6.</text>
</comment>
<comment type="subunit">
    <text evidence="24">(Microbial infection) Interacts with human spumavirus Gag.</text>
</comment>
<comment type="subunit">
    <text evidence="17">(Microbial infection) Interacts with HTLV-1 Gag.</text>
</comment>
<comment type="subunit">
    <text evidence="12">(Microbial infection) Interacts with Ebola virus VP40.</text>
</comment>
<comment type="subunit">
    <text evidence="16">(Microbial infection) Interacts with EIAV p9; the interaction has been shown in vitro.</text>
</comment>
<comment type="subunit">
    <text evidence="25">(Microbial infection) Interacts with Lassa virus protein Z.</text>
</comment>
<comment type="subunit">
    <text evidence="33">(Microbial infection) Interacts with hepatitis E virus protein ORF3.</text>
</comment>
<comment type="interaction">
    <interactant intactId="EBI-346882">
        <id>Q99816</id>
    </interactant>
    <interactant intactId="EBI-949782">
        <id>Q96IF1</id>
        <label>AJUBA</label>
    </interactant>
    <organismsDiffer>false</organismsDiffer>
    <experiments>4</experiments>
</comment>
<comment type="interaction">
    <interactant intactId="EBI-346882">
        <id>Q99816</id>
    </interactant>
    <interactant intactId="EBI-2949658">
        <id>O95429</id>
        <label>BAG4</label>
    </interactant>
    <organismsDiffer>false</organismsDiffer>
    <experiments>3</experiments>
</comment>
<comment type="interaction">
    <interactant intactId="EBI-346882">
        <id>Q99816</id>
    </interactant>
    <interactant intactId="EBI-23662416">
        <id>Q9ULD4-2</id>
        <label>BRPF3</label>
    </interactant>
    <organismsDiffer>false</organismsDiffer>
    <experiments>3</experiments>
</comment>
<comment type="interaction">
    <interactant intactId="EBI-346882">
        <id>Q99816</id>
    </interactant>
    <interactant intactId="EBI-11522698">
        <id>Q8TC20-4</id>
        <label>CAGE1</label>
    </interactant>
    <organismsDiffer>false</organismsDiffer>
    <experiments>3</experiments>
</comment>
<comment type="interaction">
    <interactant intactId="EBI-346882">
        <id>Q99816</id>
    </interactant>
    <interactant intactId="EBI-947308">
        <id>Q9Y3M2</id>
        <label>CBY1</label>
    </interactant>
    <organismsDiffer>false</organismsDiffer>
    <experiments>3</experiments>
</comment>
<comment type="interaction">
    <interactant intactId="EBI-346882">
        <id>Q99816</id>
    </interactant>
    <interactant intactId="EBI-347573">
        <id>A6NC98</id>
        <label>CCDC88B</label>
    </interactant>
    <organismsDiffer>false</organismsDiffer>
    <experiments>3</experiments>
</comment>
<comment type="interaction">
    <interactant intactId="EBI-346882">
        <id>Q99816</id>
    </interactant>
    <interactant intactId="EBI-10175300">
        <id>Q8TD31-3</id>
        <label>CCHCR1</label>
    </interactant>
    <organismsDiffer>false</organismsDiffer>
    <experiments>3</experiments>
</comment>
<comment type="interaction">
    <interactant intactId="EBI-346882">
        <id>Q99816</id>
    </interactant>
    <interactant intactId="EBI-298152">
        <id>Q9Y5K6</id>
        <label>CD2AP</label>
    </interactant>
    <organismsDiffer>false</organismsDiffer>
    <experiments>2</experiments>
</comment>
<comment type="interaction">
    <interactant intactId="EBI-346882">
        <id>Q99816</id>
    </interactant>
    <interactant intactId="EBI-747776">
        <id>Q53EZ4</id>
        <label>CEP55</label>
    </interactant>
    <organismsDiffer>false</organismsDiffer>
    <experiments>26</experiments>
</comment>
<comment type="interaction">
    <interactant intactId="EBI-346882">
        <id>Q99816</id>
    </interactant>
    <interactant intactId="EBI-11522539">
        <id>Q96MT8-3</id>
        <label>CEP63</label>
    </interactant>
    <organismsDiffer>false</organismsDiffer>
    <experiments>3</experiments>
</comment>
<comment type="interaction">
    <interactant intactId="EBI-346882">
        <id>Q99816</id>
    </interactant>
    <interactant intactId="EBI-77321">
        <id>Q9UER7</id>
        <label>DAXX</label>
    </interactant>
    <organismsDiffer>false</organismsDiffer>
    <experiments>4</experiments>
</comment>
<comment type="interaction">
    <interactant intactId="EBI-346882">
        <id>Q99816</id>
    </interactant>
    <interactant intactId="EBI-1752811">
        <id>Q9BQ89</id>
        <label>FAM110A</label>
    </interactant>
    <organismsDiffer>false</organismsDiffer>
    <experiments>3</experiments>
</comment>
<comment type="interaction">
    <interactant intactId="EBI-346882">
        <id>Q99816</id>
    </interactant>
    <interactant intactId="EBI-10175124">
        <id>Q8IZU0</id>
        <label>FAM9B</label>
    </interactant>
    <organismsDiffer>false</organismsDiffer>
    <experiments>3</experiments>
</comment>
<comment type="interaction">
    <interactant intactId="EBI-346882">
        <id>Q99816</id>
    </interactant>
    <interactant intactId="EBI-10821567">
        <id>P10070</id>
        <label>GLI2</label>
    </interactant>
    <organismsDiffer>false</organismsDiffer>
    <experiments>2</experiments>
</comment>
<comment type="interaction">
    <interactant intactId="EBI-346882">
        <id>Q99816</id>
    </interactant>
    <interactant intactId="EBI-712073">
        <id>Q8NBJ4</id>
        <label>GOLM1</label>
    </interactant>
    <organismsDiffer>false</organismsDiffer>
    <experiments>3</experiments>
</comment>
<comment type="interaction">
    <interactant intactId="EBI-346882">
        <id>Q99816</id>
    </interactant>
    <interactant intactId="EBI-2514791">
        <id>Q96CS2</id>
        <label>HAUS1</label>
    </interactant>
    <organismsDiffer>false</organismsDiffer>
    <experiments>6</experiments>
</comment>
<comment type="interaction">
    <interactant intactId="EBI-346882">
        <id>Q99816</id>
    </interactant>
    <interactant intactId="EBI-740220">
        <id>O14964</id>
        <label>HGS</label>
    </interactant>
    <organismsDiffer>false</organismsDiffer>
    <experiments>6</experiments>
</comment>
<comment type="interaction">
    <interactant intactId="EBI-346882">
        <id>Q99816</id>
    </interactant>
    <interactant intactId="EBI-3919324">
        <id>Q96JZ2</id>
        <label>HSH2D</label>
    </interactant>
    <organismsDiffer>false</organismsDiffer>
    <experiments>3</experiments>
</comment>
<comment type="interaction">
    <interactant intactId="EBI-346882">
        <id>Q99816</id>
    </interactant>
    <interactant intactId="EBI-6509505">
        <id>Q0VD86</id>
        <label>INCA1</label>
    </interactant>
    <organismsDiffer>false</organismsDiffer>
    <experiments>3</experiments>
</comment>
<comment type="interaction">
    <interactant intactId="EBI-346882">
        <id>Q99816</id>
    </interactant>
    <interactant intactId="EBI-297509">
        <id>P46940</id>
        <label>IQGAP1</label>
    </interactant>
    <organismsDiffer>false</organismsDiffer>
    <experiments>5</experiments>
</comment>
<comment type="interaction">
    <interactant intactId="EBI-346882">
        <id>Q99816</id>
    </interactant>
    <interactant intactId="EBI-722905">
        <id>P28290</id>
        <label>ITPRID2</label>
    </interactant>
    <organismsDiffer>false</organismsDiffer>
    <experiments>2</experiments>
</comment>
<comment type="interaction">
    <interactant intactId="EBI-346882">
        <id>Q99816</id>
    </interactant>
    <interactant intactId="EBI-3437878">
        <id>Q86T90</id>
        <label>KIAA1328</label>
    </interactant>
    <organismsDiffer>false</organismsDiffer>
    <experiments>3</experiments>
</comment>
<comment type="interaction">
    <interactant intactId="EBI-346882">
        <id>Q99816</id>
    </interactant>
    <interactant intactId="EBI-2125614">
        <id>Q9BVG8</id>
        <label>KIFC3</label>
    </interactant>
    <organismsDiffer>false</organismsDiffer>
    <experiments>3</experiments>
</comment>
<comment type="interaction">
    <interactant intactId="EBI-346882">
        <id>Q99816</id>
    </interactant>
    <interactant intactId="EBI-10171552">
        <id>A1A4E9</id>
        <label>KRT13</label>
    </interactant>
    <organismsDiffer>false</organismsDiffer>
    <experiments>3</experiments>
</comment>
<comment type="interaction">
    <interactant intactId="EBI-346882">
        <id>Q99816</id>
    </interactant>
    <interactant intactId="EBI-356410">
        <id>P08779</id>
        <label>KRT16</label>
    </interactant>
    <organismsDiffer>false</organismsDiffer>
    <experiments>3</experiments>
</comment>
<comment type="interaction">
    <interactant intactId="EBI-346882">
        <id>Q99816</id>
    </interactant>
    <interactant intactId="EBI-297888">
        <id>P05783</id>
        <label>KRT18</label>
    </interactant>
    <organismsDiffer>false</organismsDiffer>
    <experiments>4</experiments>
</comment>
<comment type="interaction">
    <interactant intactId="EBI-346882">
        <id>Q99816</id>
    </interactant>
    <interactant intactId="EBI-948001">
        <id>Q15323</id>
        <label>KRT31</label>
    </interactant>
    <organismsDiffer>false</organismsDiffer>
    <experiments>6</experiments>
</comment>
<comment type="interaction">
    <interactant intactId="EBI-346882">
        <id>Q99816</id>
    </interactant>
    <interactant intactId="EBI-1047093">
        <id>O76011</id>
        <label>KRT34</label>
    </interactant>
    <organismsDiffer>false</organismsDiffer>
    <experiments>5</experiments>
</comment>
<comment type="interaction">
    <interactant intactId="EBI-346882">
        <id>Q99816</id>
    </interactant>
    <interactant intactId="EBI-1058674">
        <id>Q92764</id>
        <label>KRT35</label>
    </interactant>
    <organismsDiffer>false</organismsDiffer>
    <experiments>3</experiments>
</comment>
<comment type="interaction">
    <interactant intactId="EBI-346882">
        <id>Q99816</id>
    </interactant>
    <interactant intactId="EBI-2949715">
        <id>O95678</id>
        <label>KRT75</label>
    </interactant>
    <organismsDiffer>false</organismsDiffer>
    <experiments>3</experiments>
</comment>
<comment type="interaction">
    <interactant intactId="EBI-346882">
        <id>Q99816</id>
    </interactant>
    <interactant intactId="EBI-11911016">
        <id>P80188</id>
        <label>LCN2</label>
    </interactant>
    <organismsDiffer>false</organismsDiffer>
    <experiments>3</experiments>
</comment>
<comment type="interaction">
    <interactant intactId="EBI-346882">
        <id>Q99816</id>
    </interactant>
    <interactant intactId="EBI-739546">
        <id>Q96PV6</id>
        <label>LENG8</label>
    </interactant>
    <organismsDiffer>false</organismsDiffer>
    <experiments>3</experiments>
</comment>
<comment type="interaction">
    <interactant intactId="EBI-346882">
        <id>Q99816</id>
    </interactant>
    <interactant intactId="EBI-725647">
        <id>Q99732</id>
        <label>LITAF</label>
    </interactant>
    <organismsDiffer>false</organismsDiffer>
    <experiments>3</experiments>
</comment>
<comment type="interaction">
    <interactant intactId="EBI-346882">
        <id>Q99816</id>
    </interactant>
    <interactant intactId="EBI-739832">
        <id>Q8TBB1</id>
        <label>LNX1</label>
    </interactant>
    <organismsDiffer>false</organismsDiffer>
    <experiments>3</experiments>
</comment>
<comment type="interaction">
    <interactant intactId="EBI-346882">
        <id>Q99816</id>
    </interactant>
    <interactant intactId="EBI-720984">
        <id>Q6UWE0</id>
        <label>LRSAM1</label>
    </interactant>
    <organismsDiffer>false</organismsDiffer>
    <experiments>8</experiments>
</comment>
<comment type="interaction">
    <interactant intactId="EBI-346882">
        <id>Q99816</id>
    </interactant>
    <interactant intactId="EBI-2129851">
        <id>O60291</id>
        <label>MGRN1</label>
    </interactant>
    <organismsDiffer>false</organismsDiffer>
    <experiments>5</experiments>
</comment>
<comment type="interaction">
    <interactant intactId="EBI-346882">
        <id>Q99816</id>
    </interactant>
    <interactant intactId="EBI-7212043">
        <id>Q8WU39</id>
        <label>MZB1</label>
    </interactant>
    <organismsDiffer>false</organismsDiffer>
    <experiments>3</experiments>
</comment>
<comment type="interaction">
    <interactant intactId="EBI-346882">
        <id>Q99816</id>
    </interactant>
    <interactant intactId="EBI-310624">
        <id>Q8WUM4</id>
        <label>PDCD6IP</label>
    </interactant>
    <organismsDiffer>false</organismsDiffer>
    <experiments>2</experiments>
</comment>
<comment type="interaction">
    <interactant intactId="EBI-346882">
        <id>Q99816</id>
    </interactant>
    <interactant intactId="EBI-350517">
        <id>Q9NR12</id>
        <label>PDLIM7</label>
    </interactant>
    <organismsDiffer>false</organismsDiffer>
    <experiments>10</experiments>
</comment>
<comment type="interaction">
    <interactant intactId="EBI-346882">
        <id>Q99816</id>
    </interactant>
    <interactant intactId="EBI-2692890">
        <id>Q96KN3</id>
        <label>PKNOX2</label>
    </interactant>
    <organismsDiffer>false</organismsDiffer>
    <experiments>3</experiments>
</comment>
<comment type="interaction">
    <interactant intactId="EBI-346882">
        <id>Q99816</id>
    </interactant>
    <interactant intactId="EBI-1105153">
        <id>Q96KQ4</id>
        <label>PPP1R13B</label>
    </interactant>
    <organismsDiffer>false</organismsDiffer>
    <experiments>3</experiments>
</comment>
<comment type="interaction">
    <interactant intactId="EBI-346882">
        <id>Q99816</id>
    </interactant>
    <interactant intactId="EBI-2560879">
        <id>Q96M27</id>
        <label>PRRC1</label>
    </interactant>
    <organismsDiffer>false</organismsDiffer>
    <experiments>2</experiments>
</comment>
<comment type="interaction">
    <interactant intactId="EBI-346882">
        <id>Q99816</id>
    </interactant>
    <interactant intactId="EBI-724478">
        <id>Q9H3S7</id>
        <label>PTPN23</label>
    </interactant>
    <organismsDiffer>false</organismsDiffer>
    <experiments>2</experiments>
</comment>
<comment type="interaction">
    <interactant intactId="EBI-346882">
        <id>Q99816</id>
    </interactant>
    <interactant intactId="EBI-876651">
        <id>Q13464</id>
        <label>ROCK1</label>
    </interactant>
    <organismsDiffer>false</organismsDiffer>
    <experiments>4</experiments>
</comment>
<comment type="interaction">
    <interactant intactId="EBI-346882">
        <id>Q99816</id>
    </interactant>
    <interactant intactId="EBI-12823227">
        <id>Q6ZMJ2-2</id>
        <label>SCARA5</label>
    </interactant>
    <organismsDiffer>false</organismsDiffer>
    <experiments>3</experiments>
</comment>
<comment type="interaction">
    <interactant intactId="EBI-346882">
        <id>Q99816</id>
    </interactant>
    <interactant intactId="EBI-296723">
        <id>O95295</id>
        <label>SNAPIN</label>
    </interactant>
    <organismsDiffer>false</organismsDiffer>
    <experiments>3</experiments>
</comment>
<comment type="interaction">
    <interactant intactId="EBI-346882">
        <id>Q99816</id>
    </interactant>
    <interactant intactId="EBI-6872807">
        <id>Q8N0S2</id>
        <label>SYCE1</label>
    </interactant>
    <organismsDiffer>false</organismsDiffer>
    <experiments>6</experiments>
</comment>
<comment type="interaction">
    <interactant intactId="EBI-346882">
        <id>Q99816</id>
    </interactant>
    <interactant intactId="EBI-529518">
        <id>Q86VP1</id>
        <label>TAX1BP1</label>
    </interactant>
    <organismsDiffer>false</organismsDiffer>
    <experiments>6</experiments>
</comment>
<comment type="interaction">
    <interactant intactId="EBI-346882">
        <id>Q99816</id>
    </interactant>
    <interactant intactId="EBI-1105213">
        <id>Q9UBB9</id>
        <label>TFIP11</label>
    </interactant>
    <organismsDiffer>false</organismsDiffer>
    <experiments>3</experiments>
</comment>
<comment type="interaction">
    <interactant intactId="EBI-346882">
        <id>Q99816</id>
    </interactant>
    <interactant intactId="EBI-357849">
        <id>Q15025</id>
        <label>TNIP1</label>
    </interactant>
    <organismsDiffer>false</organismsDiffer>
    <experiments>4</experiments>
</comment>
<comment type="interaction">
    <interactant intactId="EBI-346882">
        <id>Q99816</id>
    </interactant>
    <interactant intactId="EBI-712991">
        <id>O75674</id>
        <label>TOM1L1</label>
    </interactant>
    <organismsDiffer>false</organismsDiffer>
    <experiments>2</experiments>
</comment>
<comment type="interaction">
    <interactant intactId="EBI-346882">
        <id>Q99816</id>
    </interactant>
    <interactant intactId="EBI-2130429">
        <id>Q9BYV2</id>
        <label>TRIM54</label>
    </interactant>
    <organismsDiffer>false</organismsDiffer>
    <experiments>3</experiments>
</comment>
<comment type="interaction">
    <interactant intactId="EBI-346882">
        <id>Q99816</id>
    </interactant>
    <interactant intactId="EBI-11059915">
        <id>Q8N7C3</id>
        <label>TRIML2</label>
    </interactant>
    <organismsDiffer>false</organismsDiffer>
    <experiments>3</experiments>
</comment>
<comment type="interaction">
    <interactant intactId="EBI-346882">
        <id>Q99816</id>
    </interactant>
    <interactant intactId="EBI-739895">
        <id>Q8N6Y0</id>
        <label>USHBP1</label>
    </interactant>
    <organismsDiffer>false</organismsDiffer>
    <experiments>3</experiments>
</comment>
<comment type="interaction">
    <interactant intactId="EBI-346882">
        <id>Q99816</id>
    </interactant>
    <interactant intactId="EBI-727424">
        <id>Q9UK41</id>
        <label>VPS28</label>
    </interactant>
    <organismsDiffer>false</organismsDiffer>
    <experiments>15</experiments>
</comment>
<comment type="interaction">
    <interactant intactId="EBI-346882">
        <id>Q99816</id>
    </interactant>
    <interactant intactId="EBI-12146727">
        <id>Q9UK41-2</id>
        <label>VPS28</label>
    </interactant>
    <organismsDiffer>false</organismsDiffer>
    <experiments>6</experiments>
</comment>
<comment type="interaction">
    <interactant intactId="EBI-346882">
        <id>Q99816</id>
    </interactant>
    <interactant intactId="EBI-2850578">
        <id>Q8NEZ2</id>
        <label>VPS37A</label>
    </interactant>
    <organismsDiffer>false</organismsDiffer>
    <experiments>9</experiments>
</comment>
<comment type="interaction">
    <interactant intactId="EBI-346882">
        <id>Q99816</id>
    </interactant>
    <interactant intactId="EBI-10270911">
        <id>Q8NEZ2-2</id>
        <label>VPS37A</label>
    </interactant>
    <organismsDiffer>false</organismsDiffer>
    <experiments>5</experiments>
</comment>
<comment type="interaction">
    <interactant intactId="EBI-346882">
        <id>Q99816</id>
    </interactant>
    <interactant intactId="EBI-4400866">
        <id>Q9H9H4</id>
        <label>VPS37B</label>
    </interactant>
    <organismsDiffer>false</organismsDiffer>
    <experiments>5</experiments>
</comment>
<comment type="interaction">
    <interactant intactId="EBI-346882">
        <id>Q99816</id>
    </interactant>
    <interactant intactId="EBI-2559305">
        <id>A5D8V6</id>
        <label>VPS37C</label>
    </interactant>
    <organismsDiffer>false</organismsDiffer>
    <experiments>7</experiments>
</comment>
<comment type="interaction">
    <interactant intactId="EBI-346882">
        <id>Q99816</id>
    </interactant>
    <interactant intactId="EBI-1001132">
        <id>O95229</id>
        <label>ZWINT</label>
    </interactant>
    <organismsDiffer>false</organismsDiffer>
    <experiments>3</experiments>
</comment>
<comment type="interaction">
    <interactant intactId="EBI-346882">
        <id>Q99816</id>
    </interactant>
    <interactant intactId="EBI-40205277">
        <id>P18095</id>
        <label>gag</label>
    </interactant>
    <organismsDiffer>true</organismsDiffer>
    <experiments>11</experiments>
</comment>
<comment type="interaction">
    <interactant intactId="EBI-346882">
        <id>Q99816</id>
    </interactant>
    <interactant intactId="EBI-2119135">
        <id>Q99LI8</id>
        <label>Hgs</label>
    </interactant>
    <organismsDiffer>true</organismsDiffer>
    <experiments>3</experiments>
</comment>
<comment type="interaction">
    <interactant intactId="EBI-15891993">
        <id>Q99816-1</id>
    </interactant>
    <interactant intactId="EBI-740220">
        <id>O14964</id>
        <label>HGS</label>
    </interactant>
    <organismsDiffer>false</organismsDiffer>
    <experiments>2</experiments>
</comment>
<comment type="interaction">
    <interactant intactId="EBI-15891993">
        <id>Q99816-1</id>
    </interactant>
    <interactant intactId="EBI-10634977">
        <id>PRO_0000038598</id>
        <label>gag</label>
        <dbReference type="UniProtKB" id="P04591"/>
    </interactant>
    <organismsDiffer>true</organismsDiffer>
    <experiments>3</experiments>
</comment>
<comment type="subcellular location">
    <subcellularLocation>
        <location evidence="28">Cytoplasm</location>
    </subcellularLocation>
    <subcellularLocation>
        <location evidence="40">Early endosome membrane</location>
        <topology evidence="42">Peripheral membrane protein</topology>
        <orientation evidence="42">Cytoplasmic side</orientation>
    </subcellularLocation>
    <subcellularLocation>
        <location evidence="10 26">Late endosome membrane</location>
        <topology>Peripheral membrane protein</topology>
    </subcellularLocation>
    <subcellularLocation>
        <location evidence="28">Cytoplasm</location>
        <location evidence="28">Cytoskeleton</location>
        <location evidence="28">Microtubule organizing center</location>
        <location evidence="28">Centrosome</location>
    </subcellularLocation>
    <subcellularLocation>
        <location evidence="27 28">Midbody</location>
        <location evidence="27 28">Midbody ring</location>
    </subcellularLocation>
    <subcellularLocation>
        <location evidence="26">Nucleus</location>
    </subcellularLocation>
    <text evidence="27 28">Mainly cytoplasmic. Membrane-associated when active and soluble when inactive. Nuclear localization is cell cycle-dependent. Interaction with CEP55 is required for localization to the midbody during cytokinesis.</text>
</comment>
<comment type="alternative products">
    <event type="alternative splicing"/>
    <isoform>
        <id>Q99816-1</id>
        <name>1</name>
        <sequence type="displayed"/>
    </isoform>
    <isoform>
        <id>Q99816-2</id>
        <name>2</name>
        <sequence type="described" ref="VSP_004440"/>
    </isoform>
    <text>Additional isoforms seem to exist. Several shorter isoforms are detected in primary breast cancers and other tumors.</text>
</comment>
<comment type="tissue specificity">
    <text>Heart, brain, placenta, lung, liver, skeletal, kidney and pancreas.</text>
</comment>
<comment type="domain">
    <text>The UEV domain is required for the interaction of the complex with ubiquitin. It also mediates the interaction with PTAP/PSAP motifs of HIV-1 P6 protein and human spumaretrovirus Gag protein.</text>
</comment>
<comment type="domain">
    <text>The coiled coil domain may interact with stathmin.</text>
</comment>
<comment type="domain">
    <text>The UEV domain binds ubiquitin and P-[ST]-A-P peptide motif independently.</text>
</comment>
<comment type="PTM">
    <text evidence="22 26 32">Monoubiquitinated at multiple sites by LRSAM1 and by MGRN1. Ubiquitination inactivates it, possibly by regulating its shuttling between an active membrane-bound protein and an inactive soluble form. Ubiquitination by MGRN1 requires the presence of UBE2D1.</text>
</comment>
<comment type="miscellaneous">
    <molecule>Isoform 2</molecule>
    <text evidence="41">Detected in normal as well as cancer tissues.</text>
</comment>
<comment type="similarity">
    <text evidence="41">Belongs to the ubiquitin-conjugating enzyme family. UEV subfamily.</text>
</comment>
<accession>Q99816</accession>
<accession>Q9BUM5</accession>
<sequence length="390" mass="43944">MAVSESQLKKMVSKYKYRDLTVRETVNVITLYKDLKPVLDSYVFNDGSSRELMNLTGTIPVPYRGNTYNIPICLWLLDTYPYNPPICFVKPTSSMTIKTGKHVDANGKIYLPYLHEWKHPQSDLLGLIQVMIVVFGDEPPVFSRPISASYPPYQATGPPNTSYMPGMPGGISPYPSGYPPNPSGYPGCPYPPGGPYPATTSSQYPSQPPVTTVGPSRDGTISEDTIRASLISAVSDKLRWRMKEEMDRAQAELNALKRTEEDLKKGHQKLEEMVTRLDQEVAEVDKNIELLKKKDEELSSALEKMENQSENNDIDEVIIPTAPLYKQILNLYAEENAIEDTIFYLGEALRRGVIDLDVFLKHVRLLSRKQFQLRALMQKARKTAGLSDLY</sequence>
<evidence type="ECO:0000250" key="1"/>
<evidence type="ECO:0000250" key="2">
    <source>
        <dbReference type="UniProtKB" id="Q6IRE4"/>
    </source>
</evidence>
<evidence type="ECO:0000255" key="3"/>
<evidence type="ECO:0000255" key="4">
    <source>
        <dbReference type="PROSITE-ProRule" id="PRU00644"/>
    </source>
</evidence>
<evidence type="ECO:0000255" key="5">
    <source>
        <dbReference type="PROSITE-ProRule" id="PRU00652"/>
    </source>
</evidence>
<evidence type="ECO:0000256" key="6">
    <source>
        <dbReference type="SAM" id="MobiDB-lite"/>
    </source>
</evidence>
<evidence type="ECO:0000269" key="7">
    <source>
    </source>
</evidence>
<evidence type="ECO:0000269" key="8">
    <source>
    </source>
</evidence>
<evidence type="ECO:0000269" key="9">
    <source>
    </source>
</evidence>
<evidence type="ECO:0000269" key="10">
    <source>
    </source>
</evidence>
<evidence type="ECO:0000269" key="11">
    <source>
    </source>
</evidence>
<evidence type="ECO:0000269" key="12">
    <source>
    </source>
</evidence>
<evidence type="ECO:0000269" key="13">
    <source>
    </source>
</evidence>
<evidence type="ECO:0000269" key="14">
    <source>
    </source>
</evidence>
<evidence type="ECO:0000269" key="15">
    <source>
    </source>
</evidence>
<evidence type="ECO:0000269" key="16">
    <source>
    </source>
</evidence>
<evidence type="ECO:0000269" key="17">
    <source>
    </source>
</evidence>
<evidence type="ECO:0000269" key="18">
    <source>
    </source>
</evidence>
<evidence type="ECO:0000269" key="19">
    <source>
    </source>
</evidence>
<evidence type="ECO:0000269" key="20">
    <source>
    </source>
</evidence>
<evidence type="ECO:0000269" key="21">
    <source>
    </source>
</evidence>
<evidence type="ECO:0000269" key="22">
    <source>
    </source>
</evidence>
<evidence type="ECO:0000269" key="23">
    <source>
    </source>
</evidence>
<evidence type="ECO:0000269" key="24">
    <source>
    </source>
</evidence>
<evidence type="ECO:0000269" key="25">
    <source>
    </source>
</evidence>
<evidence type="ECO:0000269" key="26">
    <source>
    </source>
</evidence>
<evidence type="ECO:0000269" key="27">
    <source>
    </source>
</evidence>
<evidence type="ECO:0000269" key="28">
    <source>
    </source>
</evidence>
<evidence type="ECO:0000269" key="29">
    <source>
    </source>
</evidence>
<evidence type="ECO:0000269" key="30">
    <source>
    </source>
</evidence>
<evidence type="ECO:0000269" key="31">
    <source>
    </source>
</evidence>
<evidence type="ECO:0000269" key="32">
    <source>
    </source>
</evidence>
<evidence type="ECO:0000269" key="33">
    <source>
    </source>
</evidence>
<evidence type="ECO:0000269" key="34">
    <source>
    </source>
</evidence>
<evidence type="ECO:0000269" key="35">
    <source>
    </source>
</evidence>
<evidence type="ECO:0000269" key="36">
    <source>
    </source>
</evidence>
<evidence type="ECO:0000269" key="37">
    <source>
    </source>
</evidence>
<evidence type="ECO:0000269" key="38">
    <source>
    </source>
</evidence>
<evidence type="ECO:0000269" key="39">
    <source>
    </source>
</evidence>
<evidence type="ECO:0000269" key="40">
    <source>
    </source>
</evidence>
<evidence type="ECO:0000305" key="41"/>
<evidence type="ECO:0000305" key="42">
    <source>
    </source>
</evidence>
<evidence type="ECO:0007744" key="43">
    <source>
    </source>
</evidence>
<evidence type="ECO:0007744" key="44">
    <source>
    </source>
</evidence>
<evidence type="ECO:0007744" key="45">
    <source>
    </source>
</evidence>
<evidence type="ECO:0007829" key="46">
    <source>
        <dbReference type="PDB" id="1KPP"/>
    </source>
</evidence>
<evidence type="ECO:0007829" key="47">
    <source>
        <dbReference type="PDB" id="1S1Q"/>
    </source>
</evidence>
<evidence type="ECO:0007829" key="48">
    <source>
        <dbReference type="PDB" id="3IV1"/>
    </source>
</evidence>
<evidence type="ECO:0007829" key="49">
    <source>
        <dbReference type="PDB" id="4ZNY"/>
    </source>
</evidence>
<evidence type="ECO:0007829" key="50">
    <source>
        <dbReference type="PDB" id="6VME"/>
    </source>
</evidence>
<evidence type="ECO:0007829" key="51">
    <source>
        <dbReference type="PDB" id="7NLC"/>
    </source>
</evidence>
<dbReference type="EMBL" id="U82130">
    <property type="protein sequence ID" value="AAC52083.1"/>
    <property type="molecule type" value="mRNA"/>
</dbReference>
<dbReference type="EMBL" id="BC002487">
    <property type="protein sequence ID" value="AAH02487.1"/>
    <property type="molecule type" value="mRNA"/>
</dbReference>
<dbReference type="CCDS" id="CCDS7842.1">
    <molecule id="Q99816-1"/>
</dbReference>
<dbReference type="RefSeq" id="NP_006283.1">
    <molecule id="Q99816-1"/>
    <property type="nucleotide sequence ID" value="NM_006292.4"/>
</dbReference>
<dbReference type="PDB" id="1KPP">
    <property type="method" value="NMR"/>
    <property type="chains" value="A=1-145"/>
</dbReference>
<dbReference type="PDB" id="1KPQ">
    <property type="method" value="NMR"/>
    <property type="chains" value="A=1-145"/>
</dbReference>
<dbReference type="PDB" id="1M4P">
    <property type="method" value="NMR"/>
    <property type="chains" value="A=1-145"/>
</dbReference>
<dbReference type="PDB" id="1M4Q">
    <property type="method" value="NMR"/>
    <property type="chains" value="A=1-145"/>
</dbReference>
<dbReference type="PDB" id="1S1Q">
    <property type="method" value="X-ray"/>
    <property type="resolution" value="2.00 A"/>
    <property type="chains" value="A/C=1-145"/>
</dbReference>
<dbReference type="PDB" id="2F0R">
    <property type="method" value="X-ray"/>
    <property type="resolution" value="2.26 A"/>
    <property type="chains" value="A/B=1-145"/>
</dbReference>
<dbReference type="PDB" id="3IV1">
    <property type="method" value="X-ray"/>
    <property type="resolution" value="2.50 A"/>
    <property type="chains" value="A/B/C/D/E/F/G/H=229-304"/>
</dbReference>
<dbReference type="PDB" id="3OBQ">
    <property type="method" value="X-ray"/>
    <property type="resolution" value="1.40 A"/>
    <property type="chains" value="A=2-145"/>
</dbReference>
<dbReference type="PDB" id="3OBS">
    <property type="method" value="X-ray"/>
    <property type="resolution" value="1.50 A"/>
    <property type="chains" value="A=2-145"/>
</dbReference>
<dbReference type="PDB" id="3OBU">
    <property type="method" value="X-ray"/>
    <property type="resolution" value="1.60 A"/>
    <property type="chains" value="A=2-145"/>
</dbReference>
<dbReference type="PDB" id="3OBX">
    <property type="method" value="X-ray"/>
    <property type="resolution" value="1.60 A"/>
    <property type="chains" value="A=2-145"/>
</dbReference>
<dbReference type="PDB" id="3P9G">
    <property type="method" value="X-ray"/>
    <property type="resolution" value="1.80 A"/>
    <property type="chains" value="A=2-145"/>
</dbReference>
<dbReference type="PDB" id="3P9H">
    <property type="method" value="X-ray"/>
    <property type="resolution" value="1.80 A"/>
    <property type="chains" value="A=2-145"/>
</dbReference>
<dbReference type="PDB" id="4EJE">
    <property type="method" value="X-ray"/>
    <property type="resolution" value="2.20 A"/>
    <property type="chains" value="A/B=1-145"/>
</dbReference>
<dbReference type="PDB" id="4YC1">
    <property type="method" value="X-ray"/>
    <property type="resolution" value="2.00 A"/>
    <property type="chains" value="A/B/C=1-145"/>
</dbReference>
<dbReference type="PDB" id="4ZNY">
    <property type="method" value="X-ray"/>
    <property type="resolution" value="2.40 A"/>
    <property type="chains" value="A=4-145"/>
</dbReference>
<dbReference type="PDB" id="5VKG">
    <property type="method" value="NMR"/>
    <property type="chains" value="A=2-145"/>
</dbReference>
<dbReference type="PDB" id="6UD0">
    <property type="method" value="NMR"/>
    <property type="chains" value="C=1-145"/>
</dbReference>
<dbReference type="PDB" id="6VME">
    <property type="method" value="X-ray"/>
    <property type="resolution" value="2.19 A"/>
    <property type="chains" value="B/F/G/H/I/J=308-388"/>
</dbReference>
<dbReference type="PDB" id="7NLC">
    <property type="method" value="X-ray"/>
    <property type="resolution" value="1.40 A"/>
    <property type="chains" value="A=1-145"/>
</dbReference>
<dbReference type="PDB" id="7ZLX">
    <property type="method" value="X-ray"/>
    <property type="resolution" value="2.25 A"/>
    <property type="chains" value="A/B/C/D/E/F/G/H/I/J/K/L=1-145"/>
</dbReference>
<dbReference type="PDBsum" id="1KPP"/>
<dbReference type="PDBsum" id="1KPQ"/>
<dbReference type="PDBsum" id="1M4P"/>
<dbReference type="PDBsum" id="1M4Q"/>
<dbReference type="PDBsum" id="1S1Q"/>
<dbReference type="PDBsum" id="2F0R"/>
<dbReference type="PDBsum" id="3IV1"/>
<dbReference type="PDBsum" id="3OBQ"/>
<dbReference type="PDBsum" id="3OBS"/>
<dbReference type="PDBsum" id="3OBU"/>
<dbReference type="PDBsum" id="3OBX"/>
<dbReference type="PDBsum" id="3P9G"/>
<dbReference type="PDBsum" id="3P9H"/>
<dbReference type="PDBsum" id="4EJE"/>
<dbReference type="PDBsum" id="4YC1"/>
<dbReference type="PDBsum" id="4ZNY"/>
<dbReference type="PDBsum" id="5VKG"/>
<dbReference type="PDBsum" id="6UD0"/>
<dbReference type="PDBsum" id="6VME"/>
<dbReference type="PDBsum" id="7NLC"/>
<dbReference type="PDBsum" id="7ZLX"/>
<dbReference type="SMR" id="Q99816"/>
<dbReference type="BioGRID" id="113102">
    <property type="interactions" value="303"/>
</dbReference>
<dbReference type="ComplexPortal" id="CPX-2505">
    <property type="entry name" value="ESCRT-I complex, VPS37B-MVB12A variant"/>
</dbReference>
<dbReference type="ComplexPortal" id="CPX-7146">
    <property type="entry name" value="ESCRT-I complex, VPS37A-MVB12B variant"/>
</dbReference>
<dbReference type="ComplexPortal" id="CPX-7147">
    <property type="entry name" value="ESCRT-I complex, VPS37C-MVB12A variant"/>
</dbReference>
<dbReference type="ComplexPortal" id="CPX-7148">
    <property type="entry name" value="ESCRT-I complex, VPS37D-MVB12A variant"/>
</dbReference>
<dbReference type="ComplexPortal" id="CPX-7162">
    <property type="entry name" value="ESCRT-I complex, VPS37A-MVB12A variant"/>
</dbReference>
<dbReference type="ComplexPortal" id="CPX-7164">
    <property type="entry name" value="ESCRT-I complex, VPS37B-MVB12B variant"/>
</dbReference>
<dbReference type="ComplexPortal" id="CPX-7166">
    <property type="entry name" value="ESCRT-I complex, VPS37C-MVB12B variant"/>
</dbReference>
<dbReference type="ComplexPortal" id="CPX-7167">
    <property type="entry name" value="ESCRT-I complex, VPS37D-MVB12B variant"/>
</dbReference>
<dbReference type="ComplexPortal" id="CPX-7181">
    <property type="entry name" value="ESCRT-I complex, VPS37A-UBAP1 variant"/>
</dbReference>
<dbReference type="ComplexPortal" id="CPX-7201">
    <property type="entry name" value="ESCRT-I complex, VPS37B-UBAP1 variant"/>
</dbReference>
<dbReference type="ComplexPortal" id="CPX-7202">
    <property type="entry name" value="ESCRT-I complex, VPS37C-UBAP1 variant"/>
</dbReference>
<dbReference type="ComplexPortal" id="CPX-7203">
    <property type="entry name" value="ESCRT-I complex, VPS37D-UBAP1 variant"/>
</dbReference>
<dbReference type="CORUM" id="Q99816"/>
<dbReference type="DIP" id="DIP-31809N"/>
<dbReference type="ELM" id="Q99816"/>
<dbReference type="FunCoup" id="Q99816">
    <property type="interactions" value="3233"/>
</dbReference>
<dbReference type="IntAct" id="Q99816">
    <property type="interactions" value="206"/>
</dbReference>
<dbReference type="MINT" id="Q99816"/>
<dbReference type="STRING" id="9606.ENSP00000251968"/>
<dbReference type="BindingDB" id="Q99816"/>
<dbReference type="ChEMBL" id="CHEMBL6157"/>
<dbReference type="MoonDB" id="Q99816">
    <property type="type" value="Curated"/>
</dbReference>
<dbReference type="GlyGen" id="Q99816">
    <property type="glycosylation" value="1 site, 1 O-linked glycan (1 site)"/>
</dbReference>
<dbReference type="iPTMnet" id="Q99816"/>
<dbReference type="PhosphoSitePlus" id="Q99816"/>
<dbReference type="SwissPalm" id="Q99816"/>
<dbReference type="BioMuta" id="TSG101"/>
<dbReference type="DMDM" id="9789790"/>
<dbReference type="jPOST" id="Q99816"/>
<dbReference type="MassIVE" id="Q99816"/>
<dbReference type="PaxDb" id="9606-ENSP00000251968"/>
<dbReference type="PeptideAtlas" id="Q99816"/>
<dbReference type="ProteomicsDB" id="78490">
    <molecule id="Q99816-1"/>
</dbReference>
<dbReference type="ProteomicsDB" id="78491">
    <molecule id="Q99816-2"/>
</dbReference>
<dbReference type="Pumba" id="Q99816"/>
<dbReference type="Antibodypedia" id="1752">
    <property type="antibodies" value="510 antibodies from 40 providers"/>
</dbReference>
<dbReference type="DNASU" id="7251"/>
<dbReference type="Ensembl" id="ENST00000251968.4">
    <molecule id="Q99816-1"/>
    <property type="protein sequence ID" value="ENSP00000251968.3"/>
    <property type="gene ID" value="ENSG00000074319.13"/>
</dbReference>
<dbReference type="GeneID" id="7251"/>
<dbReference type="KEGG" id="hsa:7251"/>
<dbReference type="MANE-Select" id="ENST00000251968.4">
    <property type="protein sequence ID" value="ENSP00000251968.3"/>
    <property type="RefSeq nucleotide sequence ID" value="NM_006292.4"/>
    <property type="RefSeq protein sequence ID" value="NP_006283.1"/>
</dbReference>
<dbReference type="UCSC" id="uc001mor.4">
    <molecule id="Q99816-1"/>
    <property type="organism name" value="human"/>
</dbReference>
<dbReference type="AGR" id="HGNC:15971"/>
<dbReference type="CTD" id="7251"/>
<dbReference type="DisGeNET" id="7251"/>
<dbReference type="GeneCards" id="TSG101"/>
<dbReference type="HGNC" id="HGNC:15971">
    <property type="gene designation" value="TSG101"/>
</dbReference>
<dbReference type="HPA" id="ENSG00000074319">
    <property type="expression patterns" value="Low tissue specificity"/>
</dbReference>
<dbReference type="MalaCards" id="TSG101"/>
<dbReference type="MIM" id="601387">
    <property type="type" value="gene"/>
</dbReference>
<dbReference type="neXtProt" id="NX_Q99816"/>
<dbReference type="OpenTargets" id="ENSG00000074319"/>
<dbReference type="PharmGKB" id="PA38068"/>
<dbReference type="VEuPathDB" id="HostDB:ENSG00000074319"/>
<dbReference type="eggNOG" id="KOG2391">
    <property type="taxonomic scope" value="Eukaryota"/>
</dbReference>
<dbReference type="GeneTree" id="ENSGT00940000153903"/>
<dbReference type="HOGENOM" id="CLU_017548_1_1_1"/>
<dbReference type="InParanoid" id="Q99816"/>
<dbReference type="OMA" id="YMNFPQP"/>
<dbReference type="OrthoDB" id="306304at2759"/>
<dbReference type="PAN-GO" id="Q99816">
    <property type="GO annotations" value="3 GO annotations based on evolutionary models"/>
</dbReference>
<dbReference type="PhylomeDB" id="Q99816"/>
<dbReference type="TreeFam" id="TF312917"/>
<dbReference type="PathwayCommons" id="Q99816"/>
<dbReference type="Reactome" id="R-HSA-162588">
    <property type="pathway name" value="Budding and maturation of HIV virion"/>
</dbReference>
<dbReference type="Reactome" id="R-HSA-174490">
    <property type="pathway name" value="Membrane binding and targetting of GAG proteins"/>
</dbReference>
<dbReference type="Reactome" id="R-HSA-917729">
    <property type="pathway name" value="Endosomal Sorting Complex Required For Transport (ESCRT)"/>
</dbReference>
<dbReference type="Reactome" id="R-HSA-9610379">
    <property type="pathway name" value="HCMV Late Events"/>
</dbReference>
<dbReference type="Reactome" id="R-HSA-9615710">
    <property type="pathway name" value="Late endosomal microautophagy"/>
</dbReference>
<dbReference type="SignaLink" id="Q99816"/>
<dbReference type="SIGNOR" id="Q99816"/>
<dbReference type="BioGRID-ORCS" id="7251">
    <property type="hits" value="755 hits in 1175 CRISPR screens"/>
</dbReference>
<dbReference type="CD-CODE" id="8C2F96ED">
    <property type="entry name" value="Centrosome"/>
</dbReference>
<dbReference type="CD-CODE" id="FB4E32DD">
    <property type="entry name" value="Presynaptic clusters and postsynaptic densities"/>
</dbReference>
<dbReference type="ChiTaRS" id="TSG101">
    <property type="organism name" value="human"/>
</dbReference>
<dbReference type="EvolutionaryTrace" id="Q99816"/>
<dbReference type="GeneWiki" id="TSG101"/>
<dbReference type="GenomeRNAi" id="7251"/>
<dbReference type="Pharos" id="Q99816">
    <property type="development level" value="Tbio"/>
</dbReference>
<dbReference type="PRO" id="PR:Q99816"/>
<dbReference type="Proteomes" id="UP000005640">
    <property type="component" value="Chromosome 11"/>
</dbReference>
<dbReference type="RNAct" id="Q99816">
    <property type="molecule type" value="protein"/>
</dbReference>
<dbReference type="Bgee" id="ENSG00000074319">
    <property type="expression patterns" value="Expressed in oocyte and 210 other cell types or tissues"/>
</dbReference>
<dbReference type="ExpressionAtlas" id="Q99816">
    <property type="expression patterns" value="baseline and differential"/>
</dbReference>
<dbReference type="GO" id="GO:0005813">
    <property type="term" value="C:centrosome"/>
    <property type="evidence" value="ECO:0007669"/>
    <property type="project" value="UniProtKB-SubCell"/>
</dbReference>
<dbReference type="GO" id="GO:0005737">
    <property type="term" value="C:cytoplasm"/>
    <property type="evidence" value="ECO:0000314"/>
    <property type="project" value="UniProtKB"/>
</dbReference>
<dbReference type="GO" id="GO:0005829">
    <property type="term" value="C:cytosol"/>
    <property type="evidence" value="ECO:0000314"/>
    <property type="project" value="HPA"/>
</dbReference>
<dbReference type="GO" id="GO:0005769">
    <property type="term" value="C:early endosome"/>
    <property type="evidence" value="ECO:0000314"/>
    <property type="project" value="UniProtKB"/>
</dbReference>
<dbReference type="GO" id="GO:0031901">
    <property type="term" value="C:early endosome membrane"/>
    <property type="evidence" value="ECO:0007669"/>
    <property type="project" value="UniProtKB-SubCell"/>
</dbReference>
<dbReference type="GO" id="GO:0005768">
    <property type="term" value="C:endosome"/>
    <property type="evidence" value="ECO:0000314"/>
    <property type="project" value="UniProtKB"/>
</dbReference>
<dbReference type="GO" id="GO:0010008">
    <property type="term" value="C:endosome membrane"/>
    <property type="evidence" value="ECO:0000304"/>
    <property type="project" value="Reactome"/>
</dbReference>
<dbReference type="GO" id="GO:0000813">
    <property type="term" value="C:ESCRT I complex"/>
    <property type="evidence" value="ECO:0000314"/>
    <property type="project" value="UniProtKB"/>
</dbReference>
<dbReference type="GO" id="GO:0070062">
    <property type="term" value="C:extracellular exosome"/>
    <property type="evidence" value="ECO:0000314"/>
    <property type="project" value="UniProtKB"/>
</dbReference>
<dbReference type="GO" id="GO:0090543">
    <property type="term" value="C:Flemming body"/>
    <property type="evidence" value="ECO:0007669"/>
    <property type="project" value="UniProtKB-SubCell"/>
</dbReference>
<dbReference type="GO" id="GO:0005770">
    <property type="term" value="C:late endosome"/>
    <property type="evidence" value="ECO:0000315"/>
    <property type="project" value="BHF-UCL"/>
</dbReference>
<dbReference type="GO" id="GO:0031902">
    <property type="term" value="C:late endosome membrane"/>
    <property type="evidence" value="ECO:0007669"/>
    <property type="project" value="UniProtKB-SubCell"/>
</dbReference>
<dbReference type="GO" id="GO:0005771">
    <property type="term" value="C:multivesicular body"/>
    <property type="evidence" value="ECO:0000304"/>
    <property type="project" value="HGNC-UCL"/>
</dbReference>
<dbReference type="GO" id="GO:0005730">
    <property type="term" value="C:nucleolus"/>
    <property type="evidence" value="ECO:0000314"/>
    <property type="project" value="HPA"/>
</dbReference>
<dbReference type="GO" id="GO:0005886">
    <property type="term" value="C:plasma membrane"/>
    <property type="evidence" value="ECO:0000314"/>
    <property type="project" value="HPA"/>
</dbReference>
<dbReference type="GO" id="GO:0048306">
    <property type="term" value="F:calcium-dependent protein binding"/>
    <property type="evidence" value="ECO:0000353"/>
    <property type="project" value="UniProtKB"/>
</dbReference>
<dbReference type="GO" id="GO:0003677">
    <property type="term" value="F:DNA binding"/>
    <property type="evidence" value="ECO:0000304"/>
    <property type="project" value="ProtInc"/>
</dbReference>
<dbReference type="GO" id="GO:0042803">
    <property type="term" value="F:protein homodimerization activity"/>
    <property type="evidence" value="ECO:0000353"/>
    <property type="project" value="UniProtKB"/>
</dbReference>
<dbReference type="GO" id="GO:0044877">
    <property type="term" value="F:protein-containing complex binding"/>
    <property type="evidence" value="ECO:0000314"/>
    <property type="project" value="UniProtKB"/>
</dbReference>
<dbReference type="GO" id="GO:0003714">
    <property type="term" value="F:transcription corepressor activity"/>
    <property type="evidence" value="ECO:0000304"/>
    <property type="project" value="ProtInc"/>
</dbReference>
<dbReference type="GO" id="GO:0043130">
    <property type="term" value="F:ubiquitin binding"/>
    <property type="evidence" value="ECO:0000314"/>
    <property type="project" value="UniProtKB"/>
</dbReference>
<dbReference type="GO" id="GO:0031625">
    <property type="term" value="F:ubiquitin protein ligase binding"/>
    <property type="evidence" value="ECO:0000353"/>
    <property type="project" value="UniProtKB"/>
</dbReference>
<dbReference type="GO" id="GO:0046790">
    <property type="term" value="F:virion binding"/>
    <property type="evidence" value="ECO:0000314"/>
    <property type="project" value="UniProtKB"/>
</dbReference>
<dbReference type="GO" id="GO:0097352">
    <property type="term" value="P:autophagosome maturation"/>
    <property type="evidence" value="ECO:0000304"/>
    <property type="project" value="ParkinsonsUK-UCL"/>
</dbReference>
<dbReference type="GO" id="GO:0051301">
    <property type="term" value="P:cell division"/>
    <property type="evidence" value="ECO:0007669"/>
    <property type="project" value="UniProtKB-KW"/>
</dbReference>
<dbReference type="GO" id="GO:0008333">
    <property type="term" value="P:endosome to lysosome transport"/>
    <property type="evidence" value="ECO:0000318"/>
    <property type="project" value="GO_Central"/>
</dbReference>
<dbReference type="GO" id="GO:1990182">
    <property type="term" value="P:exosomal secretion"/>
    <property type="evidence" value="ECO:0007669"/>
    <property type="project" value="Ensembl"/>
</dbReference>
<dbReference type="GO" id="GO:0006858">
    <property type="term" value="P:extracellular transport"/>
    <property type="evidence" value="ECO:0000315"/>
    <property type="project" value="UniProtKB"/>
</dbReference>
<dbReference type="GO" id="GO:0030216">
    <property type="term" value="P:keratinocyte differentiation"/>
    <property type="evidence" value="ECO:0007669"/>
    <property type="project" value="Ensembl"/>
</dbReference>
<dbReference type="GO" id="GO:0016236">
    <property type="term" value="P:macroautophagy"/>
    <property type="evidence" value="ECO:0000304"/>
    <property type="project" value="ParkinsonsUK-UCL"/>
</dbReference>
<dbReference type="GO" id="GO:0090148">
    <property type="term" value="P:membrane fission"/>
    <property type="evidence" value="ECO:0000303"/>
    <property type="project" value="ComplexPortal"/>
</dbReference>
<dbReference type="GO" id="GO:0036258">
    <property type="term" value="P:multivesicular body assembly"/>
    <property type="evidence" value="ECO:0000304"/>
    <property type="project" value="ParkinsonsUK-UCL"/>
</dbReference>
<dbReference type="GO" id="GO:0008285">
    <property type="term" value="P:negative regulation of cell population proliferation"/>
    <property type="evidence" value="ECO:0007669"/>
    <property type="project" value="Ensembl"/>
</dbReference>
<dbReference type="GO" id="GO:0042059">
    <property type="term" value="P:negative regulation of epidermal growth factor receptor signaling pathway"/>
    <property type="evidence" value="ECO:0000315"/>
    <property type="project" value="ParkinsonsUK-UCL"/>
</dbReference>
<dbReference type="GO" id="GO:0007175">
    <property type="term" value="P:negative regulation of epidermal growth factor-activated receptor activity"/>
    <property type="evidence" value="ECO:0000315"/>
    <property type="project" value="UniProtKB"/>
</dbReference>
<dbReference type="GO" id="GO:0000122">
    <property type="term" value="P:negative regulation of transcription by RNA polymerase II"/>
    <property type="evidence" value="ECO:0007669"/>
    <property type="project" value="Ensembl"/>
</dbReference>
<dbReference type="GO" id="GO:1903543">
    <property type="term" value="P:positive regulation of exosomal secretion"/>
    <property type="evidence" value="ECO:0000315"/>
    <property type="project" value="UniProtKB"/>
</dbReference>
<dbReference type="GO" id="GO:2000397">
    <property type="term" value="P:positive regulation of ubiquitin-dependent endocytosis"/>
    <property type="evidence" value="ECO:0007669"/>
    <property type="project" value="Ensembl"/>
</dbReference>
<dbReference type="GO" id="GO:1903774">
    <property type="term" value="P:positive regulation of viral budding via host ESCRT complex"/>
    <property type="evidence" value="ECO:0000315"/>
    <property type="project" value="UniProtKB"/>
</dbReference>
<dbReference type="GO" id="GO:0036211">
    <property type="term" value="P:protein modification process"/>
    <property type="evidence" value="ECO:0007669"/>
    <property type="project" value="InterPro"/>
</dbReference>
<dbReference type="GO" id="GO:0043328">
    <property type="term" value="P:protein transport to vacuole involved in ubiquitin-dependent protein catabolic process via the multivesicular body sorting pathway"/>
    <property type="evidence" value="ECO:0000303"/>
    <property type="project" value="ComplexPortal"/>
</dbReference>
<dbReference type="GO" id="GO:0051726">
    <property type="term" value="P:regulation of cell cycle"/>
    <property type="evidence" value="ECO:0007669"/>
    <property type="project" value="Ensembl"/>
</dbReference>
<dbReference type="GO" id="GO:0001558">
    <property type="term" value="P:regulation of cell growth"/>
    <property type="evidence" value="ECO:0007669"/>
    <property type="project" value="Ensembl"/>
</dbReference>
<dbReference type="GO" id="GO:1903551">
    <property type="term" value="P:regulation of extracellular exosome assembly"/>
    <property type="evidence" value="ECO:0000315"/>
    <property type="project" value="UniProtKB"/>
</dbReference>
<dbReference type="GO" id="GO:0043405">
    <property type="term" value="P:regulation of MAP kinase activity"/>
    <property type="evidence" value="ECO:0000315"/>
    <property type="project" value="UniProtKB"/>
</dbReference>
<dbReference type="GO" id="GO:0043162">
    <property type="term" value="P:ubiquitin-dependent protein catabolic process via the multivesicular body sorting pathway"/>
    <property type="evidence" value="ECO:0000314"/>
    <property type="project" value="HGNC-UCL"/>
</dbReference>
<dbReference type="GO" id="GO:0046755">
    <property type="term" value="P:viral budding"/>
    <property type="evidence" value="ECO:0000315"/>
    <property type="project" value="UniProtKB"/>
</dbReference>
<dbReference type="GO" id="GO:0039702">
    <property type="term" value="P:viral budding via host ESCRT complex"/>
    <property type="evidence" value="ECO:0000304"/>
    <property type="project" value="ParkinsonsUK-UCL"/>
</dbReference>
<dbReference type="GO" id="GO:0019076">
    <property type="term" value="P:viral release from host cell"/>
    <property type="evidence" value="ECO:0000315"/>
    <property type="project" value="UniProtKB"/>
</dbReference>
<dbReference type="CDD" id="cd11685">
    <property type="entry name" value="UEV_TSG101-like"/>
    <property type="match status" value="1"/>
</dbReference>
<dbReference type="FunFam" id="3.10.110.10:FF:000040">
    <property type="entry name" value="tumor susceptibility gene 101 protein"/>
    <property type="match status" value="1"/>
</dbReference>
<dbReference type="Gene3D" id="6.10.140.820">
    <property type="match status" value="1"/>
</dbReference>
<dbReference type="Gene3D" id="6.10.250.370">
    <property type="match status" value="1"/>
</dbReference>
<dbReference type="Gene3D" id="3.10.110.10">
    <property type="entry name" value="Ubiquitin Conjugating Enzyme"/>
    <property type="match status" value="1"/>
</dbReference>
<dbReference type="InterPro" id="IPR052070">
    <property type="entry name" value="ESCRT-I_UEV_domain"/>
</dbReference>
<dbReference type="InterPro" id="IPR037202">
    <property type="entry name" value="ESCRT_assembly_dom"/>
</dbReference>
<dbReference type="InterPro" id="IPR017916">
    <property type="entry name" value="SB_dom"/>
</dbReference>
<dbReference type="InterPro" id="IPR016135">
    <property type="entry name" value="UBQ-conjugating_enzyme/RWD"/>
</dbReference>
<dbReference type="InterPro" id="IPR008883">
    <property type="entry name" value="UEV_N"/>
</dbReference>
<dbReference type="PANTHER" id="PTHR23306:SF17">
    <property type="entry name" value="TUMOR SUSCEPTIBILITY GENE 101 PROTEIN"/>
    <property type="match status" value="1"/>
</dbReference>
<dbReference type="PANTHER" id="PTHR23306">
    <property type="entry name" value="TUMOR SUSCEPTIBILITY GENE 101 PROTEIN-RELATED"/>
    <property type="match status" value="1"/>
</dbReference>
<dbReference type="Pfam" id="PF05743">
    <property type="entry name" value="UEV"/>
    <property type="match status" value="1"/>
</dbReference>
<dbReference type="Pfam" id="PF09454">
    <property type="entry name" value="Vps23_core"/>
    <property type="match status" value="1"/>
</dbReference>
<dbReference type="SMART" id="SM00212">
    <property type="entry name" value="UBCc"/>
    <property type="match status" value="1"/>
</dbReference>
<dbReference type="SUPFAM" id="SSF140111">
    <property type="entry name" value="Endosomal sorting complex assembly domain"/>
    <property type="match status" value="1"/>
</dbReference>
<dbReference type="SUPFAM" id="SSF54495">
    <property type="entry name" value="UBC-like"/>
    <property type="match status" value="1"/>
</dbReference>
<dbReference type="PROSITE" id="PS51312">
    <property type="entry name" value="SB"/>
    <property type="match status" value="1"/>
</dbReference>
<dbReference type="PROSITE" id="PS51322">
    <property type="entry name" value="UEV"/>
    <property type="match status" value="1"/>
</dbReference>
<keyword id="KW-0002">3D-structure</keyword>
<keyword id="KW-0007">Acetylation</keyword>
<keyword id="KW-0025">Alternative splicing</keyword>
<keyword id="KW-0131">Cell cycle</keyword>
<keyword id="KW-0132">Cell division</keyword>
<keyword id="KW-0175">Coiled coil</keyword>
<keyword id="KW-0963">Cytoplasm</keyword>
<keyword id="KW-0206">Cytoskeleton</keyword>
<keyword id="KW-0967">Endosome</keyword>
<keyword id="KW-0341">Growth regulation</keyword>
<keyword id="KW-0945">Host-virus interaction</keyword>
<keyword id="KW-0472">Membrane</keyword>
<keyword id="KW-0539">Nucleus</keyword>
<keyword id="KW-0597">Phosphoprotein</keyword>
<keyword id="KW-0653">Protein transport</keyword>
<keyword id="KW-1267">Proteomics identification</keyword>
<keyword id="KW-1185">Reference proteome</keyword>
<keyword id="KW-0813">Transport</keyword>
<keyword id="KW-0832">Ubl conjugation</keyword>
<reference key="1">
    <citation type="journal article" date="1997" name="Cell">
        <title>The TSG101 tumor susceptibility gene is located in chromosome 11 band p15 and is mutated in human breast cancer.</title>
        <authorList>
            <person name="Li L."/>
            <person name="Li X."/>
            <person name="Francke U."/>
            <person name="Cohen S.N."/>
        </authorList>
    </citation>
    <scope>NUCLEOTIDE SEQUENCE [MRNA] (ISOFORM 1)</scope>
    <scope>RETRACTED PAPER</scope>
    <source>
        <tissue>Placenta</tissue>
    </source>
</reference>
<reference key="2">
    <citation type="journal article" date="1998" name="Cell">
        <authorList>
            <person name="Li L."/>
            <person name="Francke U."/>
            <person name="Cohen S.N."/>
        </authorList>
    </citation>
    <scope>ERRATUM OF PUBMED:9019400</scope>
    <scope>RETRACTION NOTICE OF PUBMED:9019400</scope>
</reference>
<reference key="3">
    <citation type="journal article" date="2004" name="Genome Res.">
        <title>The status, quality, and expansion of the NIH full-length cDNA project: the Mammalian Gene Collection (MGC).</title>
        <authorList>
            <consortium name="The MGC Project Team"/>
        </authorList>
    </citation>
    <scope>NUCLEOTIDE SEQUENCE [LARGE SCALE MRNA] (ISOFORM 1)</scope>
    <source>
        <tissue>Eye</tissue>
    </source>
</reference>
<reference key="4">
    <citation type="journal article" date="1997" name="Oncogene">
        <title>Aberrant splicing of the TSG101 and FHIT genes occurs frequently in multiple malignancies and in normal tissues and mimics alterations previously described in tumours.</title>
        <authorList>
            <person name="Gayther S.A."/>
            <person name="Barski P."/>
            <person name="Batley S.J."/>
            <person name="Li L."/>
            <person name="de Foy K.A."/>
            <person name="Cohen S.N."/>
            <person name="Ponder B.A."/>
            <person name="Caldas C."/>
        </authorList>
    </citation>
    <scope>ALTERNATIVE SPLICING (ISOFORM 2)</scope>
</reference>
<reference key="5">
    <citation type="journal article" date="1997" name="Cancer Res.">
        <title>Aberrant splicing but not mutations of TSG101 in human breast cancer.</title>
        <authorList>
            <person name="Lee M.P."/>
            <person name="Feinberg A.P."/>
        </authorList>
    </citation>
    <scope>ALTERNATIVE SPLICING</scope>
</reference>
<reference key="6">
    <citation type="journal article" date="1998" name="Oncogene">
        <title>Genomic architecture and transcriptional activation of the mouse and human tumor susceptibility gene TSG101: common types of shorter transcripts are true alternative splice variants.</title>
        <authorList>
            <person name="Wagner K.-U."/>
            <person name="Dierisseau P."/>
            <person name="Rucker E.B. III"/>
            <person name="Robinson G.W."/>
            <person name="Hennighausen L."/>
        </authorList>
    </citation>
    <scope>ALTERNATIVE SPLICING</scope>
</reference>
<reference key="7">
    <citation type="journal article" date="2000" name="Nat. Genet.">
        <title>DNMT1 binds HDAC2 and a new co-repressor, DMAP1, to form a complex at replication foci.</title>
        <authorList>
            <person name="Rountree M.R."/>
            <person name="Bachman K.E."/>
            <person name="Baylin S.B."/>
        </authorList>
    </citation>
    <scope>INTERACTION WITH DMAP1</scope>
</reference>
<reference key="8">
    <citation type="journal article" date="2001" name="Cell">
        <title>Tsg101 and the vacuolar protein sorting pathway are essential for HIV-1 budding.</title>
        <authorList>
            <person name="Garrus J.E."/>
            <person name="von Schwedler U.K."/>
            <person name="Pornillos O.W."/>
            <person name="Morham S.G."/>
            <person name="Zavitz K.H."/>
            <person name="Wang H.E."/>
            <person name="Wettstein D.A."/>
            <person name="Stray K.M."/>
            <person name="Cote M."/>
            <person name="Rich R.L."/>
            <person name="Myszka D.G."/>
            <person name="Sundquist W.I."/>
        </authorList>
    </citation>
    <scope>INTERACTION WITH HIV-1 P6 (MICROBIAL INFECTION) AND UBIQUITIN</scope>
</reference>
<reference key="9">
    <citation type="journal article" date="2001" name="Proc. Natl. Acad. Sci. U.S.A.">
        <title>Tsg101, a homologue of ubiquitin-conjugating (E2) enzymes, binds the L domain in HIV type 1 Pr55(Gag).</title>
        <authorList>
            <person name="VerPlank L."/>
            <person name="Bouamr F."/>
            <person name="LaGrassa T.J."/>
            <person name="Agresta B."/>
            <person name="Kikonyogo A."/>
            <person name="Leis J."/>
            <person name="Carter C.A."/>
        </authorList>
    </citation>
    <scope>INTERACTION WITH HIV-1 P6 (MICROBIAL INFECTION)</scope>
</reference>
<reference key="10">
    <citation type="journal article" date="2002" name="J. Cell Biol.">
        <title>Mammalian class E vps proteins recognize ubiquitin and act in the removal of endosomal protein-ubiquitin conjugates.</title>
        <authorList>
            <person name="Bishop N."/>
            <person name="Horman A."/>
            <person name="Woodman P."/>
        </authorList>
    </citation>
    <scope>FUNCTION</scope>
    <scope>SUBCELLULAR LOCATION</scope>
</reference>
<reference key="11">
    <citation type="journal article" date="2003" name="Cell">
        <title>The protein network of HIV budding.</title>
        <authorList>
            <person name="von Schwedler U.K."/>
            <person name="Stuchell M."/>
            <person name="Mueller B."/>
            <person name="Ward D.M."/>
            <person name="Chung H.-Y."/>
            <person name="Morita E."/>
            <person name="Wang H.E."/>
            <person name="Davis T."/>
            <person name="He G.P."/>
            <person name="Cimbora D.M."/>
            <person name="Scott A."/>
            <person name="Kraeusslich H.-G."/>
            <person name="Kaplan J."/>
            <person name="Morham S.G."/>
            <person name="Sundquist W.I."/>
        </authorList>
    </citation>
    <scope>SELF-ASSOCIATION</scope>
    <scope>INTERACTION WITH PDCD6IP; VPS28; SNF8 AND VPS36</scope>
    <scope>MUTAGENESIS OF MET-95</scope>
</reference>
<reference key="12">
    <citation type="journal article" date="2003" name="J. Cell Biol.">
        <title>HIV Gag mimics the Tsg101-recruiting activity of the human Hrs protein.</title>
        <authorList>
            <person name="Pornillos O."/>
            <person name="Higginson D.S."/>
            <person name="Stray K.M."/>
            <person name="Fisher R.D."/>
            <person name="Garrus J.E."/>
            <person name="Payne M."/>
            <person name="He G.P."/>
            <person name="Wang H.E."/>
            <person name="Morham S.G."/>
            <person name="Sundquist W.I."/>
        </authorList>
    </citation>
    <scope>INTERACTION WITH HIV-1 GAG (MICROBIAL INFECTION) AND HGS</scope>
    <scope>SELF-ASSOCIATION</scope>
</reference>
<reference key="13">
    <citation type="journal article" date="2003" name="J. Mol. Biol.">
        <title>Ebola virus matrix protein VP40 interaction with human cellular factors Tsg101 and Nedd4.</title>
        <authorList>
            <person name="Timmins J."/>
            <person name="Schoehn G."/>
            <person name="Ricard-Blum S."/>
            <person name="Scianimanico S."/>
            <person name="Vernet T."/>
            <person name="Ruigrok R.W."/>
            <person name="Weissenhorn W."/>
        </authorList>
    </citation>
    <scope>INTERACTION WITH EBOLA VIRUS VP40 (MICROBIAL INFECTION)</scope>
</reference>
<reference key="14">
    <citation type="journal article" date="2003" name="J. Virol.">
        <title>PPPYVEPTAP motif is the late domain of human T-cell leukemia virus type 1 Gag and mediates its functional interaction with cellular proteins Nedd4 and Tsg101.</title>
        <authorList>
            <person name="Bouamr F."/>
            <person name="Melillo J.A."/>
            <person name="Wang M.Q."/>
            <person name="Nagashima K."/>
            <person name="de Los Santos M."/>
            <person name="Rein A."/>
            <person name="Goff S.P."/>
        </authorList>
    </citation>
    <scope>INTERACTION WITH HTLV-1 GAG (MICROBIAL INFECTION)</scope>
</reference>
<reference key="15">
    <citation type="journal article" date="2003" name="Proc. Natl. Acad. Sci. U.S.A.">
        <title>TSG101 interaction with HRS mediates endosomal trafficking and receptor down-regulation.</title>
        <authorList>
            <person name="Lu Q."/>
            <person name="Hope L.W."/>
            <person name="Brasch M."/>
            <person name="Reinhard C."/>
            <person name="Cohen S.N."/>
        </authorList>
    </citation>
    <scope>MUTAGENESIS OF ASN-45 AND MET-95</scope>
</reference>
<reference key="16">
    <citation type="journal article" date="2003" name="Proc. Natl. Acad. Sci. U.S.A.">
        <title>Divergent retroviral late-budding domains recruit vacuolar protein sorting factors by using alternative adaptor proteins.</title>
        <authorList>
            <person name="Martin-Serrano J."/>
            <person name="Yarovoy A."/>
            <person name="Perez-Caballero D."/>
            <person name="Bieniasz P.D."/>
        </authorList>
    </citation>
    <scope>SELF-ASSOCIATION</scope>
    <scope>INTERACTION WITH PDCD6IP AND EIAV P9 (MICROBIAL INFECTION)</scope>
</reference>
<reference key="17">
    <citation type="journal article" date="2003" name="Proc. Natl. Acad. Sci. U.S.A.">
        <authorList>
            <person name="Martin-Serrano J."/>
            <person name="Yarovoy A."/>
            <person name="Perez-Caballero D."/>
            <person name="Bieniasz P.D."/>
        </authorList>
    </citation>
    <scope>ERRATUM OF PUBMED:14519844</scope>
</reference>
<reference key="18">
    <citation type="journal article" date="2004" name="Genes Dev.">
        <title>Tal, a Tsg101-specific E3 ubiquitin ligase, regulates receptor endocytosis and retrovirus budding.</title>
        <authorList>
            <person name="Amit I."/>
            <person name="Yakir L."/>
            <person name="Katz M."/>
            <person name="Zwang Y."/>
            <person name="Marmor M.D."/>
            <person name="Citri A."/>
            <person name="Shtiegman K."/>
            <person name="Alroy I."/>
            <person name="Tuvia S."/>
            <person name="Reiss Y."/>
            <person name="Roubini E."/>
            <person name="Cohen M."/>
            <person name="Wides R."/>
            <person name="Bacharach E."/>
            <person name="Schubert U."/>
            <person name="Yarden Y."/>
        </authorList>
    </citation>
    <scope>UBIQUITINATION BY LRSAM1</scope>
</reference>
<reference key="19">
    <citation type="journal article" date="2004" name="J. Biol. Chem.">
        <title>The human endosomal sorting complex required for transport (ESCRT-I) and its role in HIV-1 budding.</title>
        <authorList>
            <person name="Stuchell M.D."/>
            <person name="Garrus J.E."/>
            <person name="Mueller B."/>
            <person name="Stray K.M."/>
            <person name="Ghaffarian S."/>
            <person name="McKinnon R."/>
            <person name="Kraeusslich H.-G."/>
            <person name="Morham S.G."/>
            <person name="Sundquist W.I."/>
        </authorList>
    </citation>
    <scope>INTERACTION WITH VPS37A AND VPS37B</scope>
    <scope>MUTAGENESIS OF MET-95</scope>
</reference>
<reference key="20">
    <citation type="journal article" date="2004" name="J. Biol. Chem.">
        <title>The trihelical bundle subdomain of the GGA proteins interacts with multiple partners through overlapping but distinct sites.</title>
        <authorList>
            <person name="Mattera R."/>
            <person name="Puertollano R."/>
            <person name="Smith W.J."/>
            <person name="Bonifacino J.S."/>
        </authorList>
    </citation>
    <scope>INTERACTION WITH GGA1</scope>
</reference>
<reference key="21">
    <citation type="journal article" date="2004" name="Nat. Cell Biol.">
        <title>Interactions of GGA3 with the ubiquitin sorting machinery.</title>
        <authorList>
            <person name="Puertollano R."/>
            <person name="Bonifacino J.S."/>
        </authorList>
    </citation>
    <scope>INTERACTION WITH GGA3</scope>
</reference>
<reference key="22">
    <citation type="journal article" date="2005" name="J. Biol. Chem.">
        <title>Identification of human VPS37C, a component of endosomal sorting complex required for transport-I important for viral budding.</title>
        <authorList>
            <person name="Eastman S.W."/>
            <person name="Martin-Serrano J."/>
            <person name="Chung W."/>
            <person name="Zang T."/>
            <person name="Bieniasz P.D."/>
        </authorList>
    </citation>
    <scope>INTERACTION WITH VPS37C</scope>
    <scope>MUTAGENESIS OF 368-ARG--PHE-371</scope>
</reference>
<reference key="23">
    <citation type="journal article" date="2005" name="J. Virol.">
        <title>Identification of domains in gag important for prototypic foamy virus egress.</title>
        <authorList>
            <person name="Patton G.S."/>
            <person name="Morris S.A."/>
            <person name="Chung W."/>
            <person name="Bieniasz P.D."/>
            <person name="McClure M.O."/>
        </authorList>
    </citation>
    <scope>INTERACTION WITH HUMAN SPUMARETROVIRUS GAG (MICROBIAL INFECTION)</scope>
</reference>
<reference key="24">
    <citation type="journal article" date="2006" name="J. Virol.">
        <title>Cellular factors required for Lassa virus budding.</title>
        <authorList>
            <person name="Urata S."/>
            <person name="Noda T."/>
            <person name="Kawaoka Y."/>
            <person name="Yokosawa H."/>
            <person name="Yasuda J."/>
        </authorList>
    </citation>
    <scope>INTERACTION WITH LASSA VIRUS RING FINGER PROTEIN Z (MICROBIAL INFECTION)</scope>
</reference>
<reference key="25">
    <citation type="journal article" date="2007" name="Cell Host Microbe">
        <title>Identification of human MVB12 proteins as ESCRT-I subunits that function in HIV budding.</title>
        <authorList>
            <person name="Morita E."/>
            <person name="Sandrin V."/>
            <person name="Alam S.L."/>
            <person name="Eckert D.M."/>
            <person name="Gygi S.P."/>
            <person name="Sundquist W.I."/>
        </authorList>
    </citation>
    <scope>INTERACTION WITH VPS28; VPS37A; VPS37B; VPS37C; VPS37D; MVB12A AND MVB12B</scope>
    <scope>RECONSTITUTION OF THE ESCRT-I COMPLEX</scope>
</reference>
<reference key="26">
    <citation type="journal article" date="2007" name="EMBO J.">
        <title>Human ESCRT and ALIX proteins interact with proteins of the midbody and function in cytokinesis.</title>
        <authorList>
            <person name="Morita E."/>
            <person name="Sandrin V."/>
            <person name="Chung H.Y."/>
            <person name="Morham S.G."/>
            <person name="Gygi S.P."/>
            <person name="Rodesch C.K."/>
            <person name="Sundquist W.I."/>
        </authorList>
    </citation>
    <scope>FUNCTION IN CYTOKINESIS</scope>
    <scope>SUBCELLULAR LOCATION</scope>
    <scope>INTERACTION WITH CEP55; CD2AP; IQGAP1 AND ROCK1</scope>
    <scope>MUTAGENESIS OF 158-PRO--ASN-160</scope>
</reference>
<reference key="27">
    <citation type="journal article" date="2007" name="Mol. Biol. Cell">
        <title>Spongiform neurodegeneration-associated E3 ligase Mahogunin ubiquitylates TSG101 and regulates endosomal trafficking.</title>
        <authorList>
            <person name="Kim B.Y."/>
            <person name="Olzmann J.A."/>
            <person name="Barsh G.S."/>
            <person name="Chin L.S."/>
            <person name="Li L."/>
        </authorList>
    </citation>
    <scope>INTERACTION WITH MGRN1</scope>
    <scope>UBIQUITINATION BY MGRN1</scope>
    <scope>SUBCELLULAR LOCATION</scope>
    <scope>MUTAGENESIS OF ASN-45 AND MET-95</scope>
</reference>
<reference key="28">
    <citation type="journal article" date="2007" name="Science">
        <title>Parallels between cytokinesis and retroviral budding: a role for the ESCRT machinery.</title>
        <authorList>
            <person name="Carlton J.G."/>
            <person name="Martin-Serrano J."/>
        </authorList>
    </citation>
    <scope>FUNCTION IN CYTOKINESIS</scope>
    <scope>FUNCTION IN HIV-1 BUDDING</scope>
    <scope>SUBCELLULAR LOCATION</scope>
    <scope>SELF-ASSOCIATION</scope>
    <scope>INTERACTION WITH CEP55; HSG; VPS28; VPS37A; VPS37B; VPS37C; VPS37D; PDCD6IP; LRSAM1; HIV-1 GAG AND EBOLA VIRUS VP40</scope>
    <scope>MUTAGENESIS OF 158-PRO--SER-162</scope>
</reference>
<reference key="29">
    <citation type="journal article" date="2008" name="J. Biol. Chem.">
        <title>Identification of Alix-type and non-Alix-type ALG-2-binding sites in human phospholipid scramblase 3: differential binding to an alternatively spliced isoform and amino acid-substituted mutants.</title>
        <authorList>
            <person name="Shibata H."/>
            <person name="Suzuki H."/>
            <person name="Kakiuchi T."/>
            <person name="Inuzuka T."/>
            <person name="Yoshida H."/>
            <person name="Mizuno T."/>
            <person name="Maki M."/>
        </authorList>
    </citation>
    <scope>INTERACTION WITH PDCD6</scope>
</reference>
<reference key="30">
    <citation type="journal article" date="2009" name="Anal. Chem.">
        <title>Lys-N and trypsin cover complementary parts of the phosphoproteome in a refined SCX-based approach.</title>
        <authorList>
            <person name="Gauci S."/>
            <person name="Helbig A.O."/>
            <person name="Slijper M."/>
            <person name="Krijgsveld J."/>
            <person name="Heck A.J."/>
            <person name="Mohammed S."/>
        </authorList>
    </citation>
    <scope>ACETYLATION [LARGE SCALE ANALYSIS] AT ALA-2</scope>
    <scope>CLEAVAGE OF INITIATOR METHIONINE [LARGE SCALE ANALYSIS]</scope>
    <scope>IDENTIFICATION BY MASS SPECTROMETRY [LARGE SCALE ANALYSIS]</scope>
</reference>
<reference key="31">
    <citation type="journal article" date="2009" name="Biochem. Biophys. Res. Commun.">
        <title>Penta-EF-hand protein ALG-2 functions as a Ca2+-dependent adaptor that bridges Alix and TSG101.</title>
        <authorList>
            <person name="Okumura M."/>
            <person name="Ichioka F."/>
            <person name="Kobayashi R."/>
            <person name="Suzuki H."/>
            <person name="Yoshida H."/>
            <person name="Shibata H."/>
            <person name="Maki M."/>
        </authorList>
    </citation>
    <scope>INTERACTION WITH PDCD6IP</scope>
</reference>
<reference key="32">
    <citation type="journal article" date="2009" name="Biochim. Biophys. Acta">
        <title>Abnormal regulation of TSG101 in mice with spongiform neurodegeneration.</title>
        <authorList>
            <person name="Jiao J."/>
            <person name="Sun K."/>
            <person name="Walker W.P."/>
            <person name="Bagher P."/>
            <person name="Cota C.D."/>
            <person name="Gunn T.M."/>
        </authorList>
    </citation>
    <scope>INTERACTION WITH MGRN1</scope>
    <scope>UBIQUITINATION BY MGRN1</scope>
</reference>
<reference key="33">
    <citation type="journal article" date="2011" name="BMC Syst. Biol.">
        <title>Initial characterization of the human central proteome.</title>
        <authorList>
            <person name="Burkard T.R."/>
            <person name="Planyavsky M."/>
            <person name="Kaupe I."/>
            <person name="Breitwieser F.P."/>
            <person name="Buerckstuemmer T."/>
            <person name="Bennett K.L."/>
            <person name="Superti-Furga G."/>
            <person name="Colinge J."/>
        </authorList>
    </citation>
    <scope>IDENTIFICATION BY MASS SPECTROMETRY [LARGE SCALE ANALYSIS]</scope>
</reference>
<reference key="34">
    <citation type="journal article" date="2011" name="Curr. Biol.">
        <title>UBAP1 is a component of an endosome-specific ESCRT-I complex that is essential for MVB sorting.</title>
        <authorList>
            <person name="Stefani F."/>
            <person name="Zhang L."/>
            <person name="Taylor S."/>
            <person name="Donovan J."/>
            <person name="Rollinson S."/>
            <person name="Doyotte A."/>
            <person name="Brownhill K."/>
            <person name="Bennion J."/>
            <person name="Pickering-Brown S."/>
            <person name="Woodman P."/>
        </authorList>
    </citation>
    <scope>FUNCTION</scope>
    <scope>SUBUNIT</scope>
    <scope>IDENTIFICATION IN AN ESCRT-I COMPLEX WITH UBAP1</scope>
</reference>
<reference key="35">
    <citation type="journal article" date="2011" name="J. Gen. Virol.">
        <title>A PSAP motif in the ORF3 protein of hepatitis E virus is necessary for virion release from infected cells.</title>
        <authorList>
            <person name="Nagashima S."/>
            <person name="Takahashi M."/>
            <person name="Jirintai S."/>
            <person name="Tanaka T."/>
            <person name="Yamada K."/>
            <person name="Nishizawa T."/>
            <person name="Okamoto H."/>
        </authorList>
    </citation>
    <scope>INTERACTION WITH HEPATITIS E VIRUS PROTEIN ORF3</scope>
</reference>
<reference key="36">
    <citation type="journal article" date="2011" name="J. Virol.">
        <title>Multiple interactions between the ESCRT machinery and arrestin-related proteins: implications for PPXY-dependent budding.</title>
        <authorList>
            <person name="Rauch S."/>
            <person name="Martin-Serrano J."/>
        </authorList>
    </citation>
    <scope>INTERACTION WITH ARRDC1</scope>
</reference>
<reference key="37">
    <citation type="journal article" date="2012" name="J. Cell Biol.">
        <title>Charcot-Marie-Tooth disease-linked protein SIMPLE functions with the ESCRT machinery in endosomal trafficking.</title>
        <authorList>
            <person name="Lee S.M."/>
            <person name="Chin L.S."/>
            <person name="Li L."/>
        </authorList>
    </citation>
    <scope>INTERACTION WITH LITAF</scope>
    <scope>SUBCELLULAR LOCATION</scope>
</reference>
<reference key="38">
    <citation type="journal article" date="2012" name="Nat. Cell Biol.">
        <title>Syndecan-syntenin-ALIX regulates the biogenesis of exosomes.</title>
        <authorList>
            <person name="Baietti M.F."/>
            <person name="Zhang Z."/>
            <person name="Mortier E."/>
            <person name="Melchior A."/>
            <person name="Degeest G."/>
            <person name="Geeraerts A."/>
            <person name="Ivarsson Y."/>
            <person name="Depoortere F."/>
            <person name="Coomans C."/>
            <person name="Vermeiren E."/>
            <person name="Zimmermann P."/>
            <person name="David G."/>
        </authorList>
    </citation>
    <scope>FUNCTION</scope>
</reference>
<reference key="39">
    <citation type="journal article" date="2012" name="Proc. Natl. Acad. Sci. U.S.A.">
        <title>N-terminal acetylome analyses and functional insights of the N-terminal acetyltransferase NatB.</title>
        <authorList>
            <person name="Van Damme P."/>
            <person name="Lasa M."/>
            <person name="Polevoda B."/>
            <person name="Gazquez C."/>
            <person name="Elosegui-Artola A."/>
            <person name="Kim D.S."/>
            <person name="De Juan-Pardo E."/>
            <person name="Demeyer K."/>
            <person name="Hole K."/>
            <person name="Larrea E."/>
            <person name="Timmerman E."/>
            <person name="Prieto J."/>
            <person name="Arnesen T."/>
            <person name="Sherman F."/>
            <person name="Gevaert K."/>
            <person name="Aldabe R."/>
        </authorList>
    </citation>
    <scope>ACETYLATION [LARGE SCALE ANALYSIS] AT ALA-2</scope>
    <scope>CLEAVAGE OF INITIATOR METHIONINE [LARGE SCALE ANALYSIS]</scope>
    <scope>IDENTIFICATION BY MASS SPECTROMETRY [LARGE SCALE ANALYSIS]</scope>
</reference>
<reference key="40">
    <citation type="journal article" date="2012" name="Proc. Natl. Acad. Sci. U.S.A.">
        <title>Formation and release of arrestin domain-containing protein 1-mediated microvesicles (ARMMs) at plasma membrane by recruitment of TSG101 protein.</title>
        <authorList>
            <person name="Nabhan J.F."/>
            <person name="Hu R."/>
            <person name="Oh R.S."/>
            <person name="Cohen S.N."/>
            <person name="Lu Q."/>
        </authorList>
    </citation>
    <scope>FUNCTION</scope>
    <scope>INTERACTION WITH ARRDC1</scope>
    <scope>MUTAGENESIS OF MET-95</scope>
</reference>
<reference key="41">
    <citation type="journal article" date="2013" name="J. Proteome Res.">
        <title>Toward a comprehensive characterization of a human cancer cell phosphoproteome.</title>
        <authorList>
            <person name="Zhou H."/>
            <person name="Di Palma S."/>
            <person name="Preisinger C."/>
            <person name="Peng M."/>
            <person name="Polat A.N."/>
            <person name="Heck A.J."/>
            <person name="Mohammed S."/>
        </authorList>
    </citation>
    <scope>PHOSPHORYLATION [LARGE SCALE ANALYSIS] AT THR-220</scope>
    <scope>IDENTIFICATION BY MASS SPECTROMETRY [LARGE SCALE ANALYSIS]</scope>
    <source>
        <tissue>Cervix carcinoma</tissue>
        <tissue>Erythroleukemia</tissue>
    </source>
</reference>
<reference key="42">
    <citation type="journal article" date="2015" name="Proteomics">
        <title>N-terminome analysis of the human mitochondrial proteome.</title>
        <authorList>
            <person name="Vaca Jacome A.S."/>
            <person name="Rabilloud T."/>
            <person name="Schaeffer-Reiss C."/>
            <person name="Rompais M."/>
            <person name="Ayoub D."/>
            <person name="Lane L."/>
            <person name="Bairoch A."/>
            <person name="Van Dorsselaer A."/>
            <person name="Carapito C."/>
        </authorList>
    </citation>
    <scope>IDENTIFICATION BY MASS SPECTROMETRY [LARGE SCALE ANALYSIS]</scope>
</reference>
<reference key="43">
    <citation type="journal article" date="2002" name="EMBO J.">
        <title>Structure and functional interactions of the Tsg101 UEV domain.</title>
        <authorList>
            <person name="Pornillos O.W."/>
            <person name="Alam S.L."/>
            <person name="Rich R.L."/>
            <person name="Myszka D.G."/>
            <person name="Davis D.R."/>
            <person name="Sundquist W.I."/>
        </authorList>
    </citation>
    <scope>STRUCTURE BY NMR OF 1-145</scope>
    <scope>INTERACTION WITH HIV-1 P6 (MICROBIAL INFECTION) AND UBIQUITIN</scope>
    <scope>MUTAGENESIS OF VAL-43; ASN-45; ASP-46; TYR-63; PHE-88; VAL-89; MET-95 AND VAL-141</scope>
</reference>
<reference key="44">
    <citation type="journal article" date="2002" name="Nat. Struct. Biol.">
        <title>Structure of the Tsg101 UEV domain in complex with the PTAP motif of the HIV-1 p6 protein.</title>
        <authorList>
            <person name="Pornillos O."/>
            <person name="Alam S.L."/>
            <person name="Davis D.R."/>
            <person name="Sundquist W.I."/>
        </authorList>
    </citation>
    <scope>STRUCTURE BY NMR OF 1-145</scope>
</reference>
<reference key="45">
    <citation type="journal article" date="2004" name="Mol. Cell">
        <title>Ubiquitin recognition by the human TSG101 protein.</title>
        <authorList>
            <person name="Sundquist W.I."/>
            <person name="Schubert H.L."/>
            <person name="Kelly B.N."/>
            <person name="Hill G.C."/>
            <person name="Holton J.M."/>
            <person name="Hill C.P."/>
        </authorList>
    </citation>
    <scope>X-RAY CRYSTALLOGRAPHY (2.0 ANGSTROMS) OF 1-145 IN COMPLEX WITH UBIQUITIN</scope>
</reference>
<reference key="46">
    <citation type="journal article" date="2006" name="Acta Crystallogr. D">
        <title>Structure of human TSG101 UEV domain.</title>
        <authorList>
            <person name="Palencia A."/>
            <person name="Martinez J.C."/>
            <person name="Mateo P.L."/>
            <person name="Luque I."/>
            <person name="Camara-Artigas A."/>
        </authorList>
    </citation>
    <scope>X-RAY CRYSTALLOGRAPHY (2.26 ANGSTROMS) OF 1-145</scope>
</reference>
<reference key="47">
    <citation type="journal article" date="2010" name="Structure">
        <title>Crystallographic and functional analysis of the ESCRT-I /HIV-1 Gag PTAP interaction.</title>
        <authorList>
            <person name="Im Y.J."/>
            <person name="Kuo L."/>
            <person name="Ren X."/>
            <person name="Burgos P.V."/>
            <person name="Zhao X.Z."/>
            <person name="Liu F."/>
            <person name="Burke T.R. Jr."/>
            <person name="Bonifacino J.S."/>
            <person name="Freed E.O."/>
            <person name="Hurley J.H."/>
        </authorList>
    </citation>
    <scope>X-RAY CRYSTALLOGRAPHY (1.4 ANGSTROMS) OF 2-145 IN COMPLEX WITH HIV-1 GAG P6 PEPTIDE (MICROBIAL INFECTION)</scope>
    <scope>FUNCTION</scope>
    <scope>SUBUNIT</scope>
</reference>
<reference key="48">
    <citation type="journal article" date="2011" name="ACS Med. Chem. Lett.">
        <title>Elucidation of new binding interactions with the tumor susceptibility gene 101 (Tsg101) protein using modified HIV-1 Gag-p6 derived peptide ligands.</title>
        <authorList>
            <person name="Kim S.E."/>
            <person name="Liu F."/>
            <person name="Im Y.J."/>
            <person name="Stephen A.G."/>
            <person name="Fivash M.J."/>
            <person name="Waheed A.A."/>
            <person name="Freed E.O."/>
            <person name="Fisher R.J."/>
            <person name="Hurley J.H."/>
            <person name="Burke T.R. Jr."/>
        </authorList>
    </citation>
    <scope>X-RAY CRYSTALLOGRAPHY (1.8 ANGSTROMS) OF 2-145 IN COMPLEX WITH HIV-1 GAG P6 PEPTIDE (MICROBIAL INFECTION)</scope>
    <scope>SUBUNIT</scope>
</reference>
<organism>
    <name type="scientific">Homo sapiens</name>
    <name type="common">Human</name>
    <dbReference type="NCBI Taxonomy" id="9606"/>
    <lineage>
        <taxon>Eukaryota</taxon>
        <taxon>Metazoa</taxon>
        <taxon>Chordata</taxon>
        <taxon>Craniata</taxon>
        <taxon>Vertebrata</taxon>
        <taxon>Euteleostomi</taxon>
        <taxon>Mammalia</taxon>
        <taxon>Eutheria</taxon>
        <taxon>Euarchontoglires</taxon>
        <taxon>Primates</taxon>
        <taxon>Haplorrhini</taxon>
        <taxon>Catarrhini</taxon>
        <taxon>Hominidae</taxon>
        <taxon>Homo</taxon>
    </lineage>
</organism>
<feature type="initiator methionine" description="Removed" evidence="43 44">
    <location>
        <position position="1"/>
    </location>
</feature>
<feature type="chain" id="PRO_0000082606" description="Tumor susceptibility gene 101 protein">
    <location>
        <begin position="2"/>
        <end position="390"/>
    </location>
</feature>
<feature type="domain" description="UEV" evidence="5">
    <location>
        <begin position="2"/>
        <end position="145"/>
    </location>
</feature>
<feature type="domain" description="SB" evidence="4">
    <location>
        <begin position="322"/>
        <end position="390"/>
    </location>
</feature>
<feature type="region of interest" description="Interaction with CEP55">
    <location>
        <begin position="158"/>
        <end position="162"/>
    </location>
</feature>
<feature type="region of interest" description="Disordered" evidence="6">
    <location>
        <begin position="198"/>
        <end position="220"/>
    </location>
</feature>
<feature type="coiled-coil region" evidence="3">
    <location>
        <begin position="235"/>
        <end position="316"/>
    </location>
</feature>
<feature type="short sequence motif" description="PTAP motif">
    <location>
        <begin position="320"/>
        <end position="323"/>
    </location>
</feature>
<feature type="compositionally biased region" description="Polar residues" evidence="6">
    <location>
        <begin position="198"/>
        <end position="214"/>
    </location>
</feature>
<feature type="modified residue" description="N-acetylalanine" evidence="43 44">
    <location>
        <position position="2"/>
    </location>
</feature>
<feature type="modified residue" description="Phosphothreonine" evidence="45">
    <location>
        <position position="220"/>
    </location>
</feature>
<feature type="splice variant" id="VSP_004440" description="In isoform 2." evidence="41">
    <location>
        <begin position="15"/>
        <end position="119"/>
    </location>
</feature>
<feature type="sequence variant" id="VAR_034572" description="In dbSNP:rs34385327.">
    <original>M</original>
    <variation>I</variation>
    <location>
        <position position="167"/>
    </location>
</feature>
<feature type="mutagenesis site" description="Reduces interaction with ubiquitin; inhibits down-regulation of EGFR." evidence="11">
    <original>V</original>
    <variation>A</variation>
    <location>
        <position position="43"/>
    </location>
</feature>
<feature type="mutagenesis site" description="Reduces interaction with ubiquitin. No effect on MGRN1-binding." evidence="11 13 26">
    <original>N</original>
    <variation>A</variation>
    <location>
        <position position="45"/>
    </location>
</feature>
<feature type="mutagenesis site" description="Reduces interaction with ubiquitin." evidence="11">
    <original>D</original>
    <variation>A</variation>
    <location>
        <position position="46"/>
    </location>
</feature>
<feature type="mutagenesis site" description="Reduces interaction with HIV-1 p6; impairs HIV-1 budding." evidence="11">
    <original>Y</original>
    <variation>A</variation>
    <location>
        <position position="63"/>
    </location>
</feature>
<feature type="mutagenesis site" description="Reduces interaction with ubiquitin; no effect on in interaction with HIV-1 p6." evidence="11">
    <original>F</original>
    <variation>A</variation>
    <location>
        <position position="88"/>
    </location>
</feature>
<feature type="mutagenesis site" description="No change in interaction with p6; no effect on HIV-1 budding." evidence="11">
    <original>V</original>
    <variation>A</variation>
    <location>
        <position position="89"/>
    </location>
</feature>
<feature type="mutagenesis site" description="Reduces interaction with VPS37B and HIV-1 p6; abolishes interaction with PDCD6IP; impairs HIV-1 budding; inhibits down-regulation of EGFR. Abolishes MGRN1-binding. Loss of interaction with ARRDC1." evidence="11 13 15 21 26 38">
    <original>M</original>
    <variation>A</variation>
    <location>
        <position position="95"/>
    </location>
</feature>
<feature type="mutagenesis site" description="Reduces interaction with HIV-1 p6." evidence="11">
    <original>V</original>
    <variation>A</variation>
    <location>
        <position position="141"/>
    </location>
</feature>
<feature type="mutagenesis site" description="Abolishes interaction with CEP55 and midbody localization; no effect on interaction with ESCRT-I proteins, PDCD6IP and viral proteins." evidence="27">
    <location>
        <begin position="158"/>
        <end position="162"/>
    </location>
</feature>
<feature type="mutagenesis site" description="Abolishes interaction with CEP55." evidence="28">
    <original>PPN</original>
    <variation>AAA</variation>
    <location>
        <begin position="158"/>
        <end position="160"/>
    </location>
</feature>
<feature type="mutagenesis site" description="Loss of interaction with VPS28. No effect on interaction with VPS37C." evidence="23">
    <original>RKQF</original>
    <variation>AAAA</variation>
    <location>
        <begin position="368"/>
        <end position="371"/>
    </location>
</feature>
<feature type="sequence conflict" description="In Ref. 3; AAH02487." evidence="41" ref="3">
    <original>F</original>
    <variation>L</variation>
    <location>
        <position position="343"/>
    </location>
</feature>
<feature type="helix" evidence="51">
    <location>
        <begin position="5"/>
        <end position="11"/>
    </location>
</feature>
<feature type="turn" evidence="51">
    <location>
        <begin position="12"/>
        <end position="14"/>
    </location>
</feature>
<feature type="helix" evidence="51">
    <location>
        <begin position="18"/>
        <end position="29"/>
    </location>
</feature>
<feature type="strand" evidence="51">
    <location>
        <begin position="35"/>
        <end position="43"/>
    </location>
</feature>
<feature type="strand" evidence="49">
    <location>
        <begin position="45"/>
        <end position="47"/>
    </location>
</feature>
<feature type="strand" evidence="51">
    <location>
        <begin position="49"/>
        <end position="63"/>
    </location>
</feature>
<feature type="strand" evidence="51">
    <location>
        <begin position="66"/>
        <end position="75"/>
    </location>
</feature>
<feature type="turn" evidence="51">
    <location>
        <begin position="78"/>
        <end position="81"/>
    </location>
</feature>
<feature type="strand" evidence="51">
    <location>
        <begin position="86"/>
        <end position="89"/>
    </location>
</feature>
<feature type="strand" evidence="51">
    <location>
        <begin position="95"/>
        <end position="97"/>
    </location>
</feature>
<feature type="strand" evidence="47">
    <location>
        <begin position="100"/>
        <end position="103"/>
    </location>
</feature>
<feature type="strand" evidence="46">
    <location>
        <begin position="107"/>
        <end position="109"/>
    </location>
</feature>
<feature type="helix" evidence="51">
    <location>
        <begin position="112"/>
        <end position="115"/>
    </location>
</feature>
<feature type="turn" evidence="51">
    <location>
        <begin position="119"/>
        <end position="121"/>
    </location>
</feature>
<feature type="helix" evidence="51">
    <location>
        <begin position="124"/>
        <end position="137"/>
    </location>
</feature>
<feature type="strand" evidence="51">
    <location>
        <begin position="140"/>
        <end position="143"/>
    </location>
</feature>
<feature type="helix" evidence="48">
    <location>
        <begin position="230"/>
        <end position="299"/>
    </location>
</feature>
<feature type="helix" evidence="50">
    <location>
        <begin position="314"/>
        <end position="316"/>
    </location>
</feature>
<feature type="strand" evidence="50">
    <location>
        <begin position="317"/>
        <end position="322"/>
    </location>
</feature>
<feature type="helix" evidence="50">
    <location>
        <begin position="323"/>
        <end position="350"/>
    </location>
</feature>
<feature type="helix" evidence="50">
    <location>
        <begin position="356"/>
        <end position="383"/>
    </location>
</feature>
<name>TS101_HUMAN</name>
<proteinExistence type="evidence at protein level"/>
<gene>
    <name type="primary">TSG101</name>
</gene>